<proteinExistence type="evidence at protein level"/>
<protein>
    <recommendedName>
        <fullName>Neurogenic locus notch homolog protein 1</fullName>
        <shortName>Notch 1</shortName>
    </recommendedName>
    <component>
        <recommendedName>
            <fullName>Notch 1 extracellular truncation</fullName>
            <shortName>NEXT</shortName>
        </recommendedName>
    </component>
    <component>
        <recommendedName>
            <fullName>Notch 1 intracellular domain</fullName>
            <shortName>NICD</shortName>
        </recommendedName>
    </component>
</protein>
<name>NOTC1_RAT</name>
<reference key="1">
    <citation type="journal article" date="1991" name="Development">
        <title>A homolog of Drosophila Notch expressed during mammalian development.</title>
        <authorList>
            <person name="Weinmaster G."/>
            <person name="Roberts V.J."/>
            <person name="Lemke G."/>
        </authorList>
    </citation>
    <scope>NUCLEOTIDE SEQUENCE [MRNA]</scope>
    <source>
        <tissue>Schwann cell</tissue>
    </source>
</reference>
<reference key="2">
    <citation type="submission" date="1998-04" db="EMBL/GenBank/DDBJ databases">
        <authorList>
            <person name="Weinmaster G."/>
        </authorList>
    </citation>
    <scope>SEQUENCE REVISION TO 1652-1653</scope>
</reference>
<reference key="3">
    <citation type="journal article" date="2004" name="Nature">
        <title>Genome sequence of the Brown Norway rat yields insights into mammalian evolution.</title>
        <authorList>
            <person name="Gibbs R.A."/>
            <person name="Weinstock G.M."/>
            <person name="Metzker M.L."/>
            <person name="Muzny D.M."/>
            <person name="Sodergren E.J."/>
            <person name="Scherer S."/>
            <person name="Scott G."/>
            <person name="Steffen D."/>
            <person name="Worley K.C."/>
            <person name="Burch P.E."/>
            <person name="Okwuonu G."/>
            <person name="Hines S."/>
            <person name="Lewis L."/>
            <person name="Deramo C."/>
            <person name="Delgado O."/>
            <person name="Dugan-Rocha S."/>
            <person name="Miner G."/>
            <person name="Morgan M."/>
            <person name="Hawes A."/>
            <person name="Gill R."/>
            <person name="Holt R.A."/>
            <person name="Adams M.D."/>
            <person name="Amanatides P.G."/>
            <person name="Baden-Tillson H."/>
            <person name="Barnstead M."/>
            <person name="Chin S."/>
            <person name="Evans C.A."/>
            <person name="Ferriera S."/>
            <person name="Fosler C."/>
            <person name="Glodek A."/>
            <person name="Gu Z."/>
            <person name="Jennings D."/>
            <person name="Kraft C.L."/>
            <person name="Nguyen T."/>
            <person name="Pfannkoch C.M."/>
            <person name="Sitter C."/>
            <person name="Sutton G.G."/>
            <person name="Venter J.C."/>
            <person name="Woodage T."/>
            <person name="Smith D."/>
            <person name="Lee H.-M."/>
            <person name="Gustafson E."/>
            <person name="Cahill P."/>
            <person name="Kana A."/>
            <person name="Doucette-Stamm L."/>
            <person name="Weinstock K."/>
            <person name="Fechtel K."/>
            <person name="Weiss R.B."/>
            <person name="Dunn D.M."/>
            <person name="Green E.D."/>
            <person name="Blakesley R.W."/>
            <person name="Bouffard G.G."/>
            <person name="De Jong P.J."/>
            <person name="Osoegawa K."/>
            <person name="Zhu B."/>
            <person name="Marra M."/>
            <person name="Schein J."/>
            <person name="Bosdet I."/>
            <person name="Fjell C."/>
            <person name="Jones S."/>
            <person name="Krzywinski M."/>
            <person name="Mathewson C."/>
            <person name="Siddiqui A."/>
            <person name="Wye N."/>
            <person name="McPherson J."/>
            <person name="Zhao S."/>
            <person name="Fraser C.M."/>
            <person name="Shetty J."/>
            <person name="Shatsman S."/>
            <person name="Geer K."/>
            <person name="Chen Y."/>
            <person name="Abramzon S."/>
            <person name="Nierman W.C."/>
            <person name="Havlak P.H."/>
            <person name="Chen R."/>
            <person name="Durbin K.J."/>
            <person name="Egan A."/>
            <person name="Ren Y."/>
            <person name="Song X.-Z."/>
            <person name="Li B."/>
            <person name="Liu Y."/>
            <person name="Qin X."/>
            <person name="Cawley S."/>
            <person name="Cooney A.J."/>
            <person name="D'Souza L.M."/>
            <person name="Martin K."/>
            <person name="Wu J.Q."/>
            <person name="Gonzalez-Garay M.L."/>
            <person name="Jackson A.R."/>
            <person name="Kalafus K.J."/>
            <person name="McLeod M.P."/>
            <person name="Milosavljevic A."/>
            <person name="Virk D."/>
            <person name="Volkov A."/>
            <person name="Wheeler D.A."/>
            <person name="Zhang Z."/>
            <person name="Bailey J.A."/>
            <person name="Eichler E.E."/>
            <person name="Tuzun E."/>
            <person name="Birney E."/>
            <person name="Mongin E."/>
            <person name="Ureta-Vidal A."/>
            <person name="Woodwark C."/>
            <person name="Zdobnov E."/>
            <person name="Bork P."/>
            <person name="Suyama M."/>
            <person name="Torrents D."/>
            <person name="Alexandersson M."/>
            <person name="Trask B.J."/>
            <person name="Young J.M."/>
            <person name="Huang H."/>
            <person name="Wang H."/>
            <person name="Xing H."/>
            <person name="Daniels S."/>
            <person name="Gietzen D."/>
            <person name="Schmidt J."/>
            <person name="Stevens K."/>
            <person name="Vitt U."/>
            <person name="Wingrove J."/>
            <person name="Camara F."/>
            <person name="Mar Alba M."/>
            <person name="Abril J.F."/>
            <person name="Guigo R."/>
            <person name="Smit A."/>
            <person name="Dubchak I."/>
            <person name="Rubin E.M."/>
            <person name="Couronne O."/>
            <person name="Poliakov A."/>
            <person name="Huebner N."/>
            <person name="Ganten D."/>
            <person name="Goesele C."/>
            <person name="Hummel O."/>
            <person name="Kreitler T."/>
            <person name="Lee Y.-A."/>
            <person name="Monti J."/>
            <person name="Schulz H."/>
            <person name="Zimdahl H."/>
            <person name="Himmelbauer H."/>
            <person name="Lehrach H."/>
            <person name="Jacob H.J."/>
            <person name="Bromberg S."/>
            <person name="Gullings-Handley J."/>
            <person name="Jensen-Seaman M.I."/>
            <person name="Kwitek A.E."/>
            <person name="Lazar J."/>
            <person name="Pasko D."/>
            <person name="Tonellato P.J."/>
            <person name="Twigger S."/>
            <person name="Ponting C.P."/>
            <person name="Duarte J.M."/>
            <person name="Rice S."/>
            <person name="Goodstadt L."/>
            <person name="Beatson S.A."/>
            <person name="Emes R.D."/>
            <person name="Winter E.E."/>
            <person name="Webber C."/>
            <person name="Brandt P."/>
            <person name="Nyakatura G."/>
            <person name="Adetobi M."/>
            <person name="Chiaromonte F."/>
            <person name="Elnitski L."/>
            <person name="Eswara P."/>
            <person name="Hardison R.C."/>
            <person name="Hou M."/>
            <person name="Kolbe D."/>
            <person name="Makova K."/>
            <person name="Miller W."/>
            <person name="Nekrutenko A."/>
            <person name="Riemer C."/>
            <person name="Schwartz S."/>
            <person name="Taylor J."/>
            <person name="Yang S."/>
            <person name="Zhang Y."/>
            <person name="Lindpaintner K."/>
            <person name="Andrews T.D."/>
            <person name="Caccamo M."/>
            <person name="Clamp M."/>
            <person name="Clarke L."/>
            <person name="Curwen V."/>
            <person name="Durbin R.M."/>
            <person name="Eyras E."/>
            <person name="Searle S.M."/>
            <person name="Cooper G.M."/>
            <person name="Batzoglou S."/>
            <person name="Brudno M."/>
            <person name="Sidow A."/>
            <person name="Stone E.A."/>
            <person name="Payseur B.A."/>
            <person name="Bourque G."/>
            <person name="Lopez-Otin C."/>
            <person name="Puente X.S."/>
            <person name="Chakrabarti K."/>
            <person name="Chatterji S."/>
            <person name="Dewey C."/>
            <person name="Pachter L."/>
            <person name="Bray N."/>
            <person name="Yap V.B."/>
            <person name="Caspi A."/>
            <person name="Tesler G."/>
            <person name="Pevzner P.A."/>
            <person name="Haussler D."/>
            <person name="Roskin K.M."/>
            <person name="Baertsch R."/>
            <person name="Clawson H."/>
            <person name="Furey T.S."/>
            <person name="Hinrichs A.S."/>
            <person name="Karolchik D."/>
            <person name="Kent W.J."/>
            <person name="Rosenbloom K.R."/>
            <person name="Trumbower H."/>
            <person name="Weirauch M."/>
            <person name="Cooper D.N."/>
            <person name="Stenson P.D."/>
            <person name="Ma B."/>
            <person name="Brent M."/>
            <person name="Arumugam M."/>
            <person name="Shteynberg D."/>
            <person name="Copley R.R."/>
            <person name="Taylor M.S."/>
            <person name="Riethman H."/>
            <person name="Mudunuri U."/>
            <person name="Peterson J."/>
            <person name="Guyer M."/>
            <person name="Felsenfeld A."/>
            <person name="Old S."/>
            <person name="Mockrin S."/>
            <person name="Collins F.S."/>
        </authorList>
    </citation>
    <scope>NUCLEOTIDE SEQUENCE [LARGE SCALE GENOMIC DNA]</scope>
    <source>
        <strain>Brown Norway</strain>
    </source>
</reference>
<reference key="4">
    <citation type="submission" date="2005-07" db="EMBL/GenBank/DDBJ databases">
        <authorList>
            <person name="Mural R.J."/>
            <person name="Adams M.D."/>
            <person name="Myers E.W."/>
            <person name="Smith H.O."/>
            <person name="Venter J.C."/>
        </authorList>
    </citation>
    <scope>NUCLEOTIDE SEQUENCE [LARGE SCALE GENOMIC DNA]</scope>
</reference>
<reference key="5">
    <citation type="journal article" date="2001" name="Neuron">
        <title>Notch1 and Notch3 instructively restrict bFGF-responsive multipotent neural progenitor cells to an astroglial fate.</title>
        <authorList>
            <person name="Tanigaki K."/>
            <person name="Nogaki F."/>
            <person name="Takahashi J."/>
            <person name="Tashiro K."/>
            <person name="Kurooka H."/>
            <person name="Honjo T."/>
        </authorList>
    </citation>
    <scope>FUNCTION</scope>
</reference>
<reference key="6">
    <citation type="journal article" date="1992" name="Development">
        <title>Notch2: a second mammalian Notch gene.</title>
        <authorList>
            <person name="Weinmaster G."/>
            <person name="Roberts V.J."/>
            <person name="Lemke G."/>
        </authorList>
    </citation>
    <scope>TISSUE SPECIFICITY</scope>
</reference>
<reference key="7">
    <citation type="journal article" date="2001" name="J. Comp. Neurol.">
        <title>Expression patterns of Notch1, Notch2, and Notch3 suggest multiple functional roles for the Notch-DSL signaling system during brain development.</title>
        <authorList>
            <person name="Irvin D.K."/>
            <person name="Zurcher S.D."/>
            <person name="Nguyen T."/>
            <person name="Weinmaster G."/>
            <person name="Kornblum H.I."/>
        </authorList>
    </citation>
    <scope>TISSUE SPECIFICITY</scope>
</reference>
<reference evidence="14 15" key="8">
    <citation type="journal article" date="2015" name="Science">
        <title>Structural biology. Structural basis for Notch1 engagement of Delta-like 4.</title>
        <authorList>
            <person name="Luca V.C."/>
            <person name="Jude K.M."/>
            <person name="Pierce N.W."/>
            <person name="Nachury M.V."/>
            <person name="Fischer S."/>
            <person name="Garcia K.C."/>
        </authorList>
    </citation>
    <scope>X-RAY CRYSTALLOGRAPHY (2.30 ANGSTROMS) OF 412-526 IN COMPLEX WITH DLL4 AND CALCIUM</scope>
    <scope>GLYCOSYLATION AT SER-435; SER-458; THR-466 AND SER-496</scope>
    <scope>DISULFIDE BONDS</scope>
</reference>
<sequence length="2531" mass="270822">MPRLLAPLLCLTLLPALAARGLRCSQPSGTCLNGGRCEVANGTEACVCSGAFVGQRCQDPSPCLSTPCKNAGTCYVVDHGGIVDYACSCPLGFSGPLCLTPLANACLANPCRNGGTCDLLTLTEYKCRCPPGWSGKSCQQADPCASNPCANGGQCLPFESSYICGCPPGFHGPTCRQDVNECSQNPGLCRHGGTCHNEIGSYRCACRATHTGPHCELPYVPCSPSPCQNGGTCRPTGDTTHECACLPGFAGQNCEENVDDCPGNNCKNGGACVDGVNTYNCRCPPEWTGQYCTEDVDECQLMPNACQNGGTCHNSHGGYNCVCVNGWTGEDCSENIDDCASAACFQGATCHDRVASFYCECPHGRTGLLCHLNDACISNPCNEGSNCDTNPVNGKAICTCPSGYTGPACSQDVDECALGANPCEHAGKCLNTLGSFECQCLQGYTGPRCEIDVNECISNPCQNDATCLDQIGEFQCICMPGYEGVYCEINTDECASSPCLHNGRCVDKINEFLCQCPKGFSGHLCQYDVDECASTPCKNGAKCLDGPNTYTCVCTEGYTGTHCEVDIDECDPDPCHYGLCKDGVATFTCLCQPGYTGHHCETNINECHSQPCRHGGTCQDRDNYYLCLCLKGTTGPNCEINLDDCASNPCDSGTCLDKIDGYECACEPGYTGSMCNVNIDECAGSPCHNGGTCEDGIAGFTCRCPEGYHDPTCLSEVNECNSNPCIHGACRDGLNGYKCDCAPGWSGTNCDINNNECESNPCVNGGTCKDMTSGYVCTCREGFSGPNCQTNINECASNPCLNQGTCIDDVAGYKCNCPLPYTGATCEVVLAPCATSPCKNSGVCKESEDYESFSCVCPTGWQGQTCEIDINECVKSPCRHGASCQNTNGSYRCLCQAGYTGRNCESDIDDCRPNPCHNGGSCTDGVNAAFCDCLPGFQGAFCEEDINECASNPCQNGANCTDCVDSYTCTCPTGFNGIHCENNTPDCTESSCFNGGTCVDGINSFTCLCPPGFTGSYCQYDVNECDSRPCLHGGTCQDSYGTYKCTCPQGYTGLNCQNLVRWCDSAPCKNGGKCWQTNTQYHCECRSGWTGFNCDVLSVSCEVAAQKRGIDVTLLCQHGGLCVDEEDKHYCHCQAGYTGSYCEDEVDECSPNPCQNGATCTDYLGGFSCKCVAGYHGSNCSEEINECLSQPCQNGGTCIDLTNTYKCSCPRGTQGVHCEINVDDCHPPLDPASRSPKCFNNGTCVDQVGGYTCTCPPGFVGERCEGDVNECLSNPCDPRGTQNCVQRVNDFHCECRAGHTGRRCESVINGCRGKPCRNGGVCAVASNTARGFICRCPAGFEGATCENDARTCGSLRCLNGGTCISGPRSPTCLCLGSFTGPECQFPASSPCVGSNPCYNQGTCEPTSESPFYRCLCPAKFNGLLCHILDYSFTGGAGRDIPPPQIEEACELPECQEDAGNKVCNLQCNNHACGWDGGDCSLNFNDPWKNCTQSLQCWKYFSDGHCDSQCNSAGCLFDGFDCQLTEGQCNPLYDQYCKDHFSDGHCDQGCNSAECEWDGLDCAEHVPERLAAGTLVLVVLLPPDQLRNNSFHFLRELSHVLHTNVVFKRDAQGQQMIFPYYGREEELRKHPIKRSAVGWATTSLLPGTNGGRQRRELDPMDIHGSIVYLEIDNRQCVQSSSQCFQSATDVAAFLGALASLGSLNIPYKIEAVKSETVEPPLPSQLHLMYVAAAAFVLLFFVGCGVLLSRKRRRQHGQLWFPEGFKVSEASKKKRREPLGEDSVGLKPLKNASDGALMDDNQNEWGDEDLETKKFRFEEPVVLPDLDDQTDHRQWTQQHLDAADLRVSAMAPTPPQGEVDADCMDVNVRGPDGFTPLMIASCSGGGLETGNSEEEEDAPAVISDFIYQGASLHNQTDRTGETALHLAARYSRSDAAKRLLEASADANIQDNMGRTPLHAAVSADAQGVFQILLRNRATDLDARMHDGTTPLILAARLAVEGMLEDLINSHADVNAVDDLGKSALHWAAAVNNVDAAVVLLKNGANKDMQNNKEETPLFLAAREGSYETAKVLLDHFANRDITDHMDRLPRDIAQERMHHDIVRLLDEYNLVRSPQLHGTALGGTPTLSPTLCSPNGYLGNLKSATQGKKARKPSTKGLACSSKEAKDLKARRKKSQDGKGCLLDSSSMLSPVDSLESPHGYLSDVASPPLLPSPFQQSPSMPLSHLPGMPDTHLGISHLNVAAKPEMAALAGGSRLAFEPPPPRLSHLPVASSASTVLSTNGTGAMNFTVGAPASLNGQCEWLPRLQNGMVPSQYNPLRPGVTPGTLSTQAAGLQHGMMGPIHSSLSTNTLSPIIYQGLPNTRLATQPHLVQTQQVQPQNLQIQPQNLQPPSQPHLSVSSAANGHLGRSFLSGEPSQADVQPLGPSSLPVHTILPQESQALPTSLPSSMVPPMTTTQFLTPPSQHSYSSSPVDNTPSHQLQVPEHPFLTPSPESPDQWSSSSPHSNISDWSEGISSPPTSMPSQITHIPEAFK</sequence>
<evidence type="ECO:0000250" key="1"/>
<evidence type="ECO:0000250" key="2">
    <source>
        <dbReference type="UniProtKB" id="P46531"/>
    </source>
</evidence>
<evidence type="ECO:0000250" key="3">
    <source>
        <dbReference type="UniProtKB" id="Q01705"/>
    </source>
</evidence>
<evidence type="ECO:0000255" key="4"/>
<evidence type="ECO:0000255" key="5">
    <source>
        <dbReference type="PROSITE-ProRule" id="PRU00076"/>
    </source>
</evidence>
<evidence type="ECO:0000255" key="6">
    <source>
        <dbReference type="PROSITE-ProRule" id="PRU00525"/>
    </source>
</evidence>
<evidence type="ECO:0000256" key="7">
    <source>
        <dbReference type="SAM" id="MobiDB-lite"/>
    </source>
</evidence>
<evidence type="ECO:0000269" key="8">
    <source>
    </source>
</evidence>
<evidence type="ECO:0000269" key="9">
    <source>
    </source>
</evidence>
<evidence type="ECO:0000269" key="10">
    <source>
    </source>
</evidence>
<evidence type="ECO:0000269" key="11">
    <source>
    </source>
</evidence>
<evidence type="ECO:0000305" key="12"/>
<evidence type="ECO:0000312" key="13">
    <source>
        <dbReference type="Proteomes" id="UP000002494"/>
    </source>
</evidence>
<evidence type="ECO:0007744" key="14">
    <source>
        <dbReference type="PDB" id="4XL1"/>
    </source>
</evidence>
<evidence type="ECO:0007744" key="15">
    <source>
        <dbReference type="PDB" id="4XLW"/>
    </source>
</evidence>
<evidence type="ECO:0007829" key="16">
    <source>
        <dbReference type="PDB" id="4XL1"/>
    </source>
</evidence>
<evidence type="ECO:0007829" key="17">
    <source>
        <dbReference type="PDB" id="5UK5"/>
    </source>
</evidence>
<organism evidence="13">
    <name type="scientific">Rattus norvegicus</name>
    <name type="common">Rat</name>
    <dbReference type="NCBI Taxonomy" id="10116"/>
    <lineage>
        <taxon>Eukaryota</taxon>
        <taxon>Metazoa</taxon>
        <taxon>Chordata</taxon>
        <taxon>Craniata</taxon>
        <taxon>Vertebrata</taxon>
        <taxon>Euteleostomi</taxon>
        <taxon>Mammalia</taxon>
        <taxon>Eutheria</taxon>
        <taxon>Euarchontoglires</taxon>
        <taxon>Glires</taxon>
        <taxon>Rodentia</taxon>
        <taxon>Myomorpha</taxon>
        <taxon>Muroidea</taxon>
        <taxon>Muridae</taxon>
        <taxon>Murinae</taxon>
        <taxon>Rattus</taxon>
    </lineage>
</organism>
<feature type="signal peptide" evidence="4">
    <location>
        <begin position="1"/>
        <end position="18"/>
    </location>
</feature>
<feature type="chain" id="PRO_0000007680" description="Neurogenic locus notch homolog protein 1">
    <location>
        <begin position="19"/>
        <end position="2531"/>
    </location>
</feature>
<feature type="chain" id="PRO_0000007681" description="Notch 1 extracellular truncation" evidence="1">
    <location>
        <begin position="1711"/>
        <end position="2531"/>
    </location>
</feature>
<feature type="chain" id="PRO_0000007682" description="Notch 1 intracellular domain" evidence="1">
    <location>
        <begin position="1744"/>
        <end position="2531"/>
    </location>
</feature>
<feature type="topological domain" description="Extracellular" evidence="12">
    <location>
        <begin position="19"/>
        <end position="1725"/>
    </location>
</feature>
<feature type="transmembrane region" description="Helical" evidence="2">
    <location>
        <begin position="1726"/>
        <end position="1746"/>
    </location>
</feature>
<feature type="topological domain" description="Cytoplasmic" evidence="12">
    <location>
        <begin position="1747"/>
        <end position="2531"/>
    </location>
</feature>
<feature type="domain" description="EGF-like 1" evidence="5">
    <location>
        <begin position="20"/>
        <end position="58"/>
    </location>
</feature>
<feature type="domain" description="EGF-like 2" evidence="5">
    <location>
        <begin position="59"/>
        <end position="99"/>
    </location>
</feature>
<feature type="domain" description="EGF-like 3" evidence="5">
    <location>
        <begin position="102"/>
        <end position="139"/>
    </location>
</feature>
<feature type="domain" description="EGF-like 4" evidence="5">
    <location>
        <begin position="140"/>
        <end position="176"/>
    </location>
</feature>
<feature type="domain" description="EGF-like 5; calcium-binding" evidence="5">
    <location>
        <begin position="178"/>
        <end position="216"/>
    </location>
</feature>
<feature type="domain" description="EGF-like 6" evidence="5">
    <location>
        <begin position="218"/>
        <end position="255"/>
    </location>
</feature>
<feature type="domain" description="EGF-like 7; calcium-binding" evidence="5">
    <location>
        <begin position="257"/>
        <end position="293"/>
    </location>
</feature>
<feature type="domain" description="EGF-like 8; calcium-binding" evidence="5">
    <location>
        <begin position="295"/>
        <end position="333"/>
    </location>
</feature>
<feature type="domain" description="EGF-like 9; calcium-binding" evidence="5">
    <location>
        <begin position="335"/>
        <end position="371"/>
    </location>
</feature>
<feature type="domain" description="EGF-like 10" evidence="5">
    <location>
        <begin position="372"/>
        <end position="410"/>
    </location>
</feature>
<feature type="domain" description="EGF-like 11; calcium-binding" evidence="5">
    <location>
        <begin position="412"/>
        <end position="450"/>
    </location>
</feature>
<feature type="domain" description="EGF-like 12; calcium-binding" evidence="5">
    <location>
        <begin position="452"/>
        <end position="488"/>
    </location>
</feature>
<feature type="domain" description="EGF-like 13; calcium-binding" evidence="5">
    <location>
        <begin position="490"/>
        <end position="526"/>
    </location>
</feature>
<feature type="domain" description="EGF-like 14; calcium-binding" evidence="5">
    <location>
        <begin position="528"/>
        <end position="564"/>
    </location>
</feature>
<feature type="domain" description="EGF-like 15; calcium-binding" evidence="5">
    <location>
        <begin position="566"/>
        <end position="601"/>
    </location>
</feature>
<feature type="domain" description="EGF-like 16; calcium-binding" evidence="5">
    <location>
        <begin position="603"/>
        <end position="639"/>
    </location>
</feature>
<feature type="domain" description="EGF-like 17; calcium-binding" evidence="5">
    <location>
        <begin position="641"/>
        <end position="676"/>
    </location>
</feature>
<feature type="domain" description="EGF-like 18; calcium-binding" evidence="5">
    <location>
        <begin position="678"/>
        <end position="714"/>
    </location>
</feature>
<feature type="domain" description="EGF-like 19; calcium-binding" evidence="5">
    <location>
        <begin position="716"/>
        <end position="751"/>
    </location>
</feature>
<feature type="domain" description="EGF-like 20; calcium-binding" evidence="5">
    <location>
        <begin position="753"/>
        <end position="789"/>
    </location>
</feature>
<feature type="domain" description="EGF-like 21; calcium-binding" evidence="5">
    <location>
        <begin position="791"/>
        <end position="827"/>
    </location>
</feature>
<feature type="domain" description="EGF-like 22" evidence="5">
    <location>
        <begin position="829"/>
        <end position="867"/>
    </location>
</feature>
<feature type="domain" description="EGF-like 23; calcium-binding" evidence="5">
    <location>
        <begin position="869"/>
        <end position="905"/>
    </location>
</feature>
<feature type="domain" description="EGF-like 24" evidence="5">
    <location>
        <begin position="907"/>
        <end position="943"/>
    </location>
</feature>
<feature type="domain" description="EGF-like 25; calcium-binding" evidence="5">
    <location>
        <begin position="945"/>
        <end position="981"/>
    </location>
</feature>
<feature type="domain" description="EGF-like 26" evidence="5">
    <location>
        <begin position="983"/>
        <end position="1019"/>
    </location>
</feature>
<feature type="domain" description="EGF-like 27; calcium-binding" evidence="5">
    <location>
        <begin position="1021"/>
        <end position="1057"/>
    </location>
</feature>
<feature type="domain" description="EGF-like 28" evidence="5">
    <location>
        <begin position="1059"/>
        <end position="1095"/>
    </location>
</feature>
<feature type="domain" description="EGF-like 29" evidence="12">
    <location>
        <begin position="1097"/>
        <end position="1143"/>
    </location>
</feature>
<feature type="domain" description="EGF-like 30; calcium-binding" evidence="5">
    <location>
        <begin position="1145"/>
        <end position="1181"/>
    </location>
</feature>
<feature type="domain" description="EGF-like 31; calcium-binding" evidence="5">
    <location>
        <begin position="1183"/>
        <end position="1219"/>
    </location>
</feature>
<feature type="domain" description="EGF-like 32; calcium-binding" evidence="5">
    <location>
        <begin position="1221"/>
        <end position="1265"/>
    </location>
</feature>
<feature type="domain" description="EGF-like 33" evidence="5">
    <location>
        <begin position="1267"/>
        <end position="1305"/>
    </location>
</feature>
<feature type="domain" description="EGF-like 34" evidence="5">
    <location>
        <begin position="1307"/>
        <end position="1346"/>
    </location>
</feature>
<feature type="domain" description="EGF-like 35" evidence="5">
    <location>
        <begin position="1348"/>
        <end position="1384"/>
    </location>
</feature>
<feature type="domain" description="EGF-like 36" evidence="5">
    <location>
        <begin position="1387"/>
        <end position="1426"/>
    </location>
</feature>
<feature type="repeat" description="LNR 1">
    <location>
        <begin position="1449"/>
        <end position="1489"/>
    </location>
</feature>
<feature type="repeat" description="LNR 2">
    <location>
        <begin position="1490"/>
        <end position="1531"/>
    </location>
</feature>
<feature type="repeat" description="LNR 3">
    <location>
        <begin position="1532"/>
        <end position="1571"/>
    </location>
</feature>
<feature type="repeat" description="ANK 1">
    <location>
        <begin position="1917"/>
        <end position="1946"/>
    </location>
</feature>
<feature type="repeat" description="ANK 2">
    <location>
        <begin position="1950"/>
        <end position="1980"/>
    </location>
</feature>
<feature type="repeat" description="ANK 3">
    <location>
        <begin position="1984"/>
        <end position="2013"/>
    </location>
</feature>
<feature type="repeat" description="ANK 4">
    <location>
        <begin position="2017"/>
        <end position="2046"/>
    </location>
</feature>
<feature type="repeat" description="ANK 5">
    <location>
        <begin position="2050"/>
        <end position="2079"/>
    </location>
</feature>
<feature type="region of interest" description="Interaction with DLL4" evidence="11 14">
    <location>
        <begin position="420"/>
        <end position="421"/>
    </location>
</feature>
<feature type="region of interest" description="Interaction with DLL4" evidence="11 14">
    <location>
        <begin position="448"/>
        <end position="452"/>
    </location>
</feature>
<feature type="region of interest" description="Interaction with PSEN1" evidence="2">
    <location>
        <begin position="1718"/>
        <end position="1750"/>
    </location>
</feature>
<feature type="region of interest" description="Disordered" evidence="7">
    <location>
        <begin position="1770"/>
        <end position="1798"/>
    </location>
</feature>
<feature type="region of interest" description="HIF1AN-binding" evidence="1">
    <location>
        <begin position="1937"/>
        <end position="1945"/>
    </location>
</feature>
<feature type="region of interest" description="HIF1AN-binding" evidence="1">
    <location>
        <begin position="2004"/>
        <end position="2012"/>
    </location>
</feature>
<feature type="region of interest" description="Disordered" evidence="7">
    <location>
        <begin position="2141"/>
        <end position="2185"/>
    </location>
</feature>
<feature type="region of interest" description="Disordered" evidence="7">
    <location>
        <begin position="2382"/>
        <end position="2428"/>
    </location>
</feature>
<feature type="region of interest" description="Disordered" evidence="7">
    <location>
        <begin position="2440"/>
        <end position="2531"/>
    </location>
</feature>
<feature type="compositionally biased region" description="Low complexity" evidence="7">
    <location>
        <begin position="2382"/>
        <end position="2395"/>
    </location>
</feature>
<feature type="compositionally biased region" description="Polar residues" evidence="7">
    <location>
        <begin position="2440"/>
        <end position="2478"/>
    </location>
</feature>
<feature type="compositionally biased region" description="Low complexity" evidence="7">
    <location>
        <begin position="2488"/>
        <end position="2503"/>
    </location>
</feature>
<feature type="compositionally biased region" description="Polar residues" evidence="7">
    <location>
        <begin position="2504"/>
        <end position="2524"/>
    </location>
</feature>
<feature type="binding site" evidence="11 14">
    <location>
        <position position="432"/>
    </location>
    <ligand>
        <name>Ca(2+)</name>
        <dbReference type="ChEBI" id="CHEBI:29108"/>
        <label>1</label>
    </ligand>
</feature>
<feature type="binding site" evidence="11 14">
    <location>
        <position position="435"/>
    </location>
    <ligand>
        <name>Ca(2+)</name>
        <dbReference type="ChEBI" id="CHEBI:29108"/>
        <label>1</label>
    </ligand>
</feature>
<feature type="binding site" evidence="11 14">
    <location>
        <position position="452"/>
    </location>
    <ligand>
        <name>Ca(2+)</name>
        <dbReference type="ChEBI" id="CHEBI:29108"/>
        <label>2</label>
    </ligand>
</feature>
<feature type="binding site" evidence="11 14">
    <location>
        <position position="453"/>
    </location>
    <ligand>
        <name>Ca(2+)</name>
        <dbReference type="ChEBI" id="CHEBI:29108"/>
        <label>2</label>
    </ligand>
</feature>
<feature type="binding site" evidence="11 14">
    <location>
        <position position="455"/>
    </location>
    <ligand>
        <name>Ca(2+)</name>
        <dbReference type="ChEBI" id="CHEBI:29108"/>
        <label>2</label>
    </ligand>
</feature>
<feature type="binding site" evidence="11 14">
    <location>
        <position position="469"/>
    </location>
    <ligand>
        <name>Ca(2+)</name>
        <dbReference type="ChEBI" id="CHEBI:29108"/>
        <label>2</label>
    </ligand>
</feature>
<feature type="binding site" evidence="11 14">
    <location>
        <position position="470"/>
    </location>
    <ligand>
        <name>Ca(2+)</name>
        <dbReference type="ChEBI" id="CHEBI:29108"/>
        <label>2</label>
    </ligand>
</feature>
<feature type="binding site" evidence="11 14">
    <location>
        <position position="490"/>
    </location>
    <ligand>
        <name>Ca(2+)</name>
        <dbReference type="ChEBI" id="CHEBI:29108"/>
        <label>3</label>
    </ligand>
</feature>
<feature type="binding site" evidence="11 14">
    <location>
        <position position="491"/>
    </location>
    <ligand>
        <name>Ca(2+)</name>
        <dbReference type="ChEBI" id="CHEBI:29108"/>
        <label>3</label>
    </ligand>
</feature>
<feature type="binding site" evidence="11 14">
    <location>
        <position position="493"/>
    </location>
    <ligand>
        <name>Ca(2+)</name>
        <dbReference type="ChEBI" id="CHEBI:29108"/>
        <label>3</label>
    </ligand>
</feature>
<feature type="binding site" evidence="11 14">
    <location>
        <position position="507"/>
    </location>
    <ligand>
        <name>Ca(2+)</name>
        <dbReference type="ChEBI" id="CHEBI:29108"/>
        <label>3</label>
    </ligand>
</feature>
<feature type="binding site" evidence="11 14">
    <location>
        <position position="508"/>
    </location>
    <ligand>
        <name>Ca(2+)</name>
        <dbReference type="ChEBI" id="CHEBI:29108"/>
        <label>3</label>
    </ligand>
</feature>
<feature type="binding site" evidence="6">
    <location>
        <position position="1457"/>
    </location>
    <ligand>
        <name>Ca(2+)</name>
        <dbReference type="ChEBI" id="CHEBI:29108"/>
        <label>4</label>
    </ligand>
</feature>
<feature type="binding site" evidence="6">
    <location>
        <position position="1460"/>
    </location>
    <ligand>
        <name>Ca(2+)</name>
        <dbReference type="ChEBI" id="CHEBI:29108"/>
        <label>4</label>
    </ligand>
</feature>
<feature type="binding site" evidence="6">
    <location>
        <position position="1475"/>
    </location>
    <ligand>
        <name>Ca(2+)</name>
        <dbReference type="ChEBI" id="CHEBI:29108"/>
        <label>4</label>
    </ligand>
</feature>
<feature type="binding site" evidence="6">
    <location>
        <position position="1478"/>
    </location>
    <ligand>
        <name>Ca(2+)</name>
        <dbReference type="ChEBI" id="CHEBI:29108"/>
        <label>4</label>
    </ligand>
</feature>
<feature type="site" description="Interaction with DLL4" evidence="11 14">
    <location>
        <position position="469"/>
    </location>
</feature>
<feature type="site" description="Cleavage; by furin-like protease" evidence="3">
    <location>
        <begin position="1654"/>
        <end position="1655"/>
    </location>
</feature>
<feature type="site" description="Cleavage; by ADAM17" evidence="3">
    <location>
        <begin position="1710"/>
        <end position="1711"/>
    </location>
</feature>
<feature type="modified residue" description="Phosphothreonine" evidence="3">
    <location>
        <position position="1851"/>
    </location>
</feature>
<feature type="modified residue" description="(3S)-3-hydroxyasparagine; by HIF1AN" evidence="1">
    <location>
        <position position="1945"/>
    </location>
</feature>
<feature type="modified residue" description="(3S)-3-hydroxyasparagine; by HIF1AN" evidence="1">
    <location>
        <position position="2012"/>
    </location>
</feature>
<feature type="glycosylation site" description="N-linked (GlcNAc...) asparagine" evidence="4">
    <location>
        <position position="41"/>
    </location>
</feature>
<feature type="glycosylation site" description="O-linked (Glc...) serine" evidence="3">
    <location>
        <position position="65"/>
    </location>
</feature>
<feature type="glycosylation site" description="O-linked (Fuc...) threonine" evidence="3">
    <location>
        <position position="73"/>
    </location>
</feature>
<feature type="glycosylation site" description="O-linked (Fuc...) threonine" evidence="3">
    <location>
        <position position="116"/>
    </location>
</feature>
<feature type="glycosylation site" description="O-linked (Glc...) serine" evidence="3">
    <location>
        <position position="146"/>
    </location>
</feature>
<feature type="glycosylation site" description="O-linked (Fuc...) threonine" evidence="3">
    <location>
        <position position="194"/>
    </location>
</feature>
<feature type="glycosylation site" description="O-linked (Fuc...) threonine; alternate" evidence="3">
    <location>
        <position position="232"/>
    </location>
</feature>
<feature type="glycosylation site" description="O-linked (GalNAc...) threonine; alternate" evidence="3">
    <location>
        <position position="232"/>
    </location>
</feature>
<feature type="glycosylation site" description="O-linked (Fuc...) threonine" evidence="3">
    <location>
        <position position="311"/>
    </location>
</feature>
<feature type="glycosylation site" description="O-linked (Glc...) serine" evidence="3">
    <location>
        <position position="341"/>
    </location>
</feature>
<feature type="glycosylation site" description="O-linked (Fuc...) threonine" evidence="3">
    <location>
        <position position="349"/>
    </location>
</feature>
<feature type="glycosylation site" description="O-linked (Glc...) serine" evidence="3">
    <location>
        <position position="378"/>
    </location>
</feature>
<feature type="glycosylation site" description="O-linked (Glc...) serine" evidence="11 14">
    <location>
        <position position="435"/>
    </location>
</feature>
<feature type="glycosylation site" description="O-linked (Glc...) serine" evidence="11">
    <location>
        <position position="458"/>
    </location>
</feature>
<feature type="glycosylation site" description="O-linked (Fuc...) threonine" evidence="11 14">
    <location>
        <position position="466"/>
    </location>
</feature>
<feature type="glycosylation site" description="O-linked (Glc...) serine" evidence="11">
    <location>
        <position position="496"/>
    </location>
</feature>
<feature type="glycosylation site" description="O-linked (Glc...) serine" evidence="3">
    <location>
        <position position="534"/>
    </location>
</feature>
<feature type="glycosylation site" description="O-linked (Glc...) serine" evidence="3">
    <location>
        <position position="609"/>
    </location>
</feature>
<feature type="glycosylation site" description="O-linked (Fuc...) threonine" evidence="3">
    <location>
        <position position="617"/>
    </location>
</feature>
<feature type="glycosylation site" description="O-linked (Glc...) serine" evidence="3">
    <location>
        <position position="647"/>
    </location>
</feature>
<feature type="glycosylation site" description="O-linked (Fuc...) threonine" evidence="3">
    <location>
        <position position="692"/>
    </location>
</feature>
<feature type="glycosylation site" description="O-linked (Glc...) serine" evidence="3">
    <location>
        <position position="722"/>
    </location>
</feature>
<feature type="glycosylation site" description="O-linked (Glc...) serine" evidence="3">
    <location>
        <position position="759"/>
    </location>
</feature>
<feature type="glycosylation site" description="O-linked (Fuc...) threonine" evidence="3">
    <location>
        <position position="767"/>
    </location>
</feature>
<feature type="glycosylation site" description="O-linked (GlcNAc) serine" evidence="3">
    <location>
        <position position="784"/>
    </location>
</feature>
<feature type="glycosylation site" description="O-linked (Glc...) serine" evidence="3">
    <location>
        <position position="797"/>
    </location>
</feature>
<feature type="glycosylation site" description="O-linked (Fuc...) threonine" evidence="3">
    <location>
        <position position="805"/>
    </location>
</feature>
<feature type="glycosylation site" description="N-linked (GlcNAc...) asparagine" evidence="4">
    <location>
        <position position="888"/>
    </location>
</feature>
<feature type="glycosylation site" description="O-linked (GlcNAc) threonine" evidence="3">
    <location>
        <position position="900"/>
    </location>
</feature>
<feature type="glycosylation site" description="O-linked (Fuc) serine" evidence="3">
    <location>
        <position position="921"/>
    </location>
</feature>
<feature type="glycosylation site" description="O-linked (Glc...) serine" evidence="3">
    <location>
        <position position="951"/>
    </location>
</feature>
<feature type="glycosylation site" description="N-linked (GlcNAc...) asparagine" evidence="4">
    <location>
        <position position="959"/>
    </location>
</feature>
<feature type="glycosylation site" description="O-linked (Fuc...) threonine" evidence="3">
    <location>
        <position position="997"/>
    </location>
</feature>
<feature type="glycosylation site" description="O-linked (Glc...) serine" evidence="3">
    <location>
        <position position="1027"/>
    </location>
</feature>
<feature type="glycosylation site" description="O-linked (Fuc...) threonine" evidence="3">
    <location>
        <position position="1035"/>
    </location>
</feature>
<feature type="glycosylation site" description="O-linked (Glc...) serine" evidence="3">
    <location>
        <position position="1065"/>
    </location>
</feature>
<feature type="glycosylation site" description="O-linked (Fuc...) threonine" evidence="3">
    <location>
        <position position="1159"/>
    </location>
</feature>
<feature type="glycosylation site" description="N-linked (GlcNAc...) asparagine" evidence="4">
    <location>
        <position position="1179"/>
    </location>
</feature>
<feature type="glycosylation site" description="O-linked (Glc...) serine" evidence="3">
    <location>
        <position position="1189"/>
    </location>
</feature>
<feature type="glycosylation site" description="O-linked (Fuc...) threonine" evidence="3">
    <location>
        <position position="1197"/>
    </location>
</feature>
<feature type="glycosylation site" description="N-linked (GlcNAc...) asparagine" evidence="4">
    <location>
        <position position="1241"/>
    </location>
</feature>
<feature type="glycosylation site" description="O-linked (Glc...) serine" evidence="3">
    <location>
        <position position="1273"/>
    </location>
</feature>
<feature type="glycosylation site" description="O-linked (Fuc...) threonine" evidence="3">
    <location>
        <position position="1362"/>
    </location>
</feature>
<feature type="glycosylation site" description="O-linked (GlcNAc...) threonine" evidence="3">
    <location>
        <position position="1379"/>
    </location>
</feature>
<feature type="glycosylation site" description="O-linked (Fuc...) threonine; alternate" evidence="3">
    <location>
        <position position="1402"/>
    </location>
</feature>
<feature type="glycosylation site" description="O-linked (GalNAc...) threonine; alternate" evidence="3">
    <location>
        <position position="1402"/>
    </location>
</feature>
<feature type="glycosylation site" description="N-linked (GlcNAc...) asparagine" evidence="4">
    <location>
        <position position="1489"/>
    </location>
</feature>
<feature type="glycosylation site" description="N-linked (GlcNAc...) asparagine" evidence="4">
    <location>
        <position position="1587"/>
    </location>
</feature>
<feature type="glycosylation site" description="O-linked (GalNAc...) threonine" evidence="2">
    <location>
        <position position="1715"/>
    </location>
</feature>
<feature type="disulfide bond" evidence="1">
    <location>
        <begin position="24"/>
        <end position="37"/>
    </location>
</feature>
<feature type="disulfide bond" evidence="1">
    <location>
        <begin position="31"/>
        <end position="46"/>
    </location>
</feature>
<feature type="disulfide bond" evidence="1">
    <location>
        <begin position="48"/>
        <end position="57"/>
    </location>
</feature>
<feature type="disulfide bond" evidence="1">
    <location>
        <begin position="63"/>
        <end position="74"/>
    </location>
</feature>
<feature type="disulfide bond" evidence="1">
    <location>
        <begin position="68"/>
        <end position="87"/>
    </location>
</feature>
<feature type="disulfide bond" evidence="1">
    <location>
        <begin position="89"/>
        <end position="98"/>
    </location>
</feature>
<feature type="disulfide bond" evidence="1">
    <location>
        <begin position="106"/>
        <end position="117"/>
    </location>
</feature>
<feature type="disulfide bond" evidence="1">
    <location>
        <begin position="111"/>
        <end position="127"/>
    </location>
</feature>
<feature type="disulfide bond" evidence="1">
    <location>
        <begin position="129"/>
        <end position="138"/>
    </location>
</feature>
<feature type="disulfide bond" evidence="1">
    <location>
        <begin position="144"/>
        <end position="155"/>
    </location>
</feature>
<feature type="disulfide bond" evidence="1">
    <location>
        <begin position="149"/>
        <end position="164"/>
    </location>
</feature>
<feature type="disulfide bond" evidence="1">
    <location>
        <begin position="166"/>
        <end position="175"/>
    </location>
</feature>
<feature type="disulfide bond" evidence="1">
    <location>
        <begin position="182"/>
        <end position="195"/>
    </location>
</feature>
<feature type="disulfide bond" evidence="1">
    <location>
        <begin position="189"/>
        <end position="204"/>
    </location>
</feature>
<feature type="disulfide bond" evidence="1">
    <location>
        <begin position="206"/>
        <end position="215"/>
    </location>
</feature>
<feature type="disulfide bond" evidence="1">
    <location>
        <begin position="222"/>
        <end position="233"/>
    </location>
</feature>
<feature type="disulfide bond" evidence="1">
    <location>
        <begin position="227"/>
        <end position="243"/>
    </location>
</feature>
<feature type="disulfide bond" evidence="1">
    <location>
        <begin position="245"/>
        <end position="254"/>
    </location>
</feature>
<feature type="disulfide bond" evidence="1">
    <location>
        <begin position="261"/>
        <end position="272"/>
    </location>
</feature>
<feature type="disulfide bond" evidence="1">
    <location>
        <begin position="266"/>
        <end position="281"/>
    </location>
</feature>
<feature type="disulfide bond" evidence="1">
    <location>
        <begin position="283"/>
        <end position="292"/>
    </location>
</feature>
<feature type="disulfide bond" evidence="1">
    <location>
        <begin position="299"/>
        <end position="312"/>
    </location>
</feature>
<feature type="disulfide bond" evidence="1">
    <location>
        <begin position="306"/>
        <end position="321"/>
    </location>
</feature>
<feature type="disulfide bond" evidence="1">
    <location>
        <begin position="323"/>
        <end position="332"/>
    </location>
</feature>
<feature type="disulfide bond" evidence="1">
    <location>
        <begin position="339"/>
        <end position="350"/>
    </location>
</feature>
<feature type="disulfide bond" evidence="1">
    <location>
        <begin position="344"/>
        <end position="359"/>
    </location>
</feature>
<feature type="disulfide bond" evidence="1">
    <location>
        <begin position="361"/>
        <end position="370"/>
    </location>
</feature>
<feature type="disulfide bond" evidence="1">
    <location>
        <begin position="376"/>
        <end position="387"/>
    </location>
</feature>
<feature type="disulfide bond" evidence="1">
    <location>
        <begin position="381"/>
        <end position="398"/>
    </location>
</feature>
<feature type="disulfide bond" evidence="1">
    <location>
        <begin position="400"/>
        <end position="409"/>
    </location>
</feature>
<feature type="disulfide bond" evidence="11 14">
    <location>
        <begin position="416"/>
        <end position="429"/>
    </location>
</feature>
<feature type="disulfide bond" evidence="11 14">
    <location>
        <begin position="423"/>
        <end position="438"/>
    </location>
</feature>
<feature type="disulfide bond" evidence="11 14">
    <location>
        <begin position="440"/>
        <end position="449"/>
    </location>
</feature>
<feature type="disulfide bond" evidence="11 14">
    <location>
        <begin position="456"/>
        <end position="467"/>
    </location>
</feature>
<feature type="disulfide bond" evidence="11 14">
    <location>
        <begin position="461"/>
        <end position="476"/>
    </location>
</feature>
<feature type="disulfide bond" evidence="11 14">
    <location>
        <begin position="478"/>
        <end position="487"/>
    </location>
</feature>
<feature type="disulfide bond" evidence="11 14">
    <location>
        <begin position="494"/>
        <end position="505"/>
    </location>
</feature>
<feature type="disulfide bond" evidence="11 14">
    <location>
        <begin position="499"/>
        <end position="514"/>
    </location>
</feature>
<feature type="disulfide bond" evidence="11 14">
    <location>
        <begin position="516"/>
        <end position="525"/>
    </location>
</feature>
<feature type="disulfide bond" evidence="1">
    <location>
        <begin position="532"/>
        <end position="543"/>
    </location>
</feature>
<feature type="disulfide bond" evidence="1">
    <location>
        <begin position="537"/>
        <end position="552"/>
    </location>
</feature>
<feature type="disulfide bond" evidence="1">
    <location>
        <begin position="554"/>
        <end position="563"/>
    </location>
</feature>
<feature type="disulfide bond" evidence="1">
    <location>
        <begin position="570"/>
        <end position="580"/>
    </location>
</feature>
<feature type="disulfide bond" evidence="1">
    <location>
        <begin position="575"/>
        <end position="589"/>
    </location>
</feature>
<feature type="disulfide bond" evidence="1">
    <location>
        <begin position="591"/>
        <end position="600"/>
    </location>
</feature>
<feature type="disulfide bond" evidence="1">
    <location>
        <begin position="607"/>
        <end position="618"/>
    </location>
</feature>
<feature type="disulfide bond" evidence="1">
    <location>
        <begin position="612"/>
        <end position="627"/>
    </location>
</feature>
<feature type="disulfide bond" evidence="1">
    <location>
        <begin position="629"/>
        <end position="638"/>
    </location>
</feature>
<feature type="disulfide bond" evidence="1">
    <location>
        <begin position="645"/>
        <end position="655"/>
    </location>
</feature>
<feature type="disulfide bond" evidence="1">
    <location>
        <begin position="650"/>
        <end position="664"/>
    </location>
</feature>
<feature type="disulfide bond" evidence="1">
    <location>
        <begin position="666"/>
        <end position="675"/>
    </location>
</feature>
<feature type="disulfide bond" evidence="1">
    <location>
        <begin position="682"/>
        <end position="693"/>
    </location>
</feature>
<feature type="disulfide bond" evidence="1">
    <location>
        <begin position="687"/>
        <end position="702"/>
    </location>
</feature>
<feature type="disulfide bond" evidence="1">
    <location>
        <begin position="704"/>
        <end position="713"/>
    </location>
</feature>
<feature type="disulfide bond" evidence="1">
    <location>
        <begin position="720"/>
        <end position="730"/>
    </location>
</feature>
<feature type="disulfide bond" evidence="1">
    <location>
        <begin position="725"/>
        <end position="739"/>
    </location>
</feature>
<feature type="disulfide bond" evidence="1">
    <location>
        <begin position="741"/>
        <end position="750"/>
    </location>
</feature>
<feature type="disulfide bond" evidence="1">
    <location>
        <begin position="757"/>
        <end position="768"/>
    </location>
</feature>
<feature type="disulfide bond" evidence="1">
    <location>
        <begin position="762"/>
        <end position="777"/>
    </location>
</feature>
<feature type="disulfide bond" evidence="1">
    <location>
        <begin position="779"/>
        <end position="788"/>
    </location>
</feature>
<feature type="disulfide bond" evidence="1">
    <location>
        <begin position="795"/>
        <end position="806"/>
    </location>
</feature>
<feature type="disulfide bond" evidence="1">
    <location>
        <begin position="800"/>
        <end position="815"/>
    </location>
</feature>
<feature type="disulfide bond" evidence="1">
    <location>
        <begin position="817"/>
        <end position="826"/>
    </location>
</feature>
<feature type="disulfide bond" evidence="1">
    <location>
        <begin position="833"/>
        <end position="844"/>
    </location>
</feature>
<feature type="disulfide bond" evidence="1">
    <location>
        <begin position="838"/>
        <end position="855"/>
    </location>
</feature>
<feature type="disulfide bond" evidence="1">
    <location>
        <begin position="857"/>
        <end position="866"/>
    </location>
</feature>
<feature type="disulfide bond" evidence="1">
    <location>
        <begin position="873"/>
        <end position="884"/>
    </location>
</feature>
<feature type="disulfide bond" evidence="1">
    <location>
        <begin position="878"/>
        <end position="893"/>
    </location>
</feature>
<feature type="disulfide bond" evidence="1">
    <location>
        <begin position="895"/>
        <end position="904"/>
    </location>
</feature>
<feature type="disulfide bond" evidence="1">
    <location>
        <begin position="911"/>
        <end position="922"/>
    </location>
</feature>
<feature type="disulfide bond" evidence="1">
    <location>
        <begin position="916"/>
        <end position="931"/>
    </location>
</feature>
<feature type="disulfide bond" evidence="1">
    <location>
        <begin position="933"/>
        <end position="942"/>
    </location>
</feature>
<feature type="disulfide bond" evidence="1">
    <location>
        <begin position="949"/>
        <end position="960"/>
    </location>
</feature>
<feature type="disulfide bond" evidence="1">
    <location>
        <begin position="954"/>
        <end position="969"/>
    </location>
</feature>
<feature type="disulfide bond" evidence="1">
    <location>
        <begin position="971"/>
        <end position="980"/>
    </location>
</feature>
<feature type="disulfide bond" evidence="1">
    <location>
        <begin position="987"/>
        <end position="998"/>
    </location>
</feature>
<feature type="disulfide bond" evidence="1">
    <location>
        <begin position="992"/>
        <end position="1007"/>
    </location>
</feature>
<feature type="disulfide bond" evidence="1">
    <location>
        <begin position="1009"/>
        <end position="1018"/>
    </location>
</feature>
<feature type="disulfide bond" evidence="1">
    <location>
        <begin position="1025"/>
        <end position="1036"/>
    </location>
</feature>
<feature type="disulfide bond" evidence="1">
    <location>
        <begin position="1030"/>
        <end position="1045"/>
    </location>
</feature>
<feature type="disulfide bond" evidence="1">
    <location>
        <begin position="1047"/>
        <end position="1056"/>
    </location>
</feature>
<feature type="disulfide bond" evidence="1">
    <location>
        <begin position="1063"/>
        <end position="1074"/>
    </location>
</feature>
<feature type="disulfide bond" evidence="1">
    <location>
        <begin position="1068"/>
        <end position="1083"/>
    </location>
</feature>
<feature type="disulfide bond" evidence="1">
    <location>
        <begin position="1085"/>
        <end position="1094"/>
    </location>
</feature>
<feature type="disulfide bond" evidence="12">
    <location>
        <begin position="1101"/>
        <end position="1122"/>
    </location>
</feature>
<feature type="disulfide bond" evidence="1">
    <location>
        <begin position="1116"/>
        <end position="1131"/>
    </location>
</feature>
<feature type="disulfide bond" evidence="1">
    <location>
        <begin position="1133"/>
        <end position="1142"/>
    </location>
</feature>
<feature type="disulfide bond" evidence="1">
    <location>
        <begin position="1149"/>
        <end position="1160"/>
    </location>
</feature>
<feature type="disulfide bond" evidence="1">
    <location>
        <begin position="1154"/>
        <end position="1169"/>
    </location>
</feature>
<feature type="disulfide bond" evidence="1">
    <location>
        <begin position="1171"/>
        <end position="1180"/>
    </location>
</feature>
<feature type="disulfide bond" evidence="1">
    <location>
        <begin position="1187"/>
        <end position="1198"/>
    </location>
</feature>
<feature type="disulfide bond" evidence="1">
    <location>
        <begin position="1192"/>
        <end position="1207"/>
    </location>
</feature>
<feature type="disulfide bond" evidence="1">
    <location>
        <begin position="1209"/>
        <end position="1218"/>
    </location>
</feature>
<feature type="disulfide bond" evidence="1">
    <location>
        <begin position="1225"/>
        <end position="1244"/>
    </location>
</feature>
<feature type="disulfide bond" evidence="1">
    <location>
        <begin position="1238"/>
        <end position="1253"/>
    </location>
</feature>
<feature type="disulfide bond" evidence="1">
    <location>
        <begin position="1255"/>
        <end position="1264"/>
    </location>
</feature>
<feature type="disulfide bond" evidence="1">
    <location>
        <begin position="1271"/>
        <end position="1284"/>
    </location>
</feature>
<feature type="disulfide bond" evidence="1">
    <location>
        <begin position="1276"/>
        <end position="1293"/>
    </location>
</feature>
<feature type="disulfide bond" evidence="1">
    <location>
        <begin position="1295"/>
        <end position="1304"/>
    </location>
</feature>
<feature type="disulfide bond" evidence="1">
    <location>
        <begin position="1311"/>
        <end position="1322"/>
    </location>
</feature>
<feature type="disulfide bond" evidence="1">
    <location>
        <begin position="1316"/>
        <end position="1334"/>
    </location>
</feature>
<feature type="disulfide bond" evidence="1">
    <location>
        <begin position="1336"/>
        <end position="1345"/>
    </location>
</feature>
<feature type="disulfide bond" evidence="1">
    <location>
        <begin position="1352"/>
        <end position="1363"/>
    </location>
</feature>
<feature type="disulfide bond" evidence="1">
    <location>
        <begin position="1357"/>
        <end position="1372"/>
    </location>
</feature>
<feature type="disulfide bond" evidence="1">
    <location>
        <begin position="1374"/>
        <end position="1383"/>
    </location>
</feature>
<feature type="disulfide bond" evidence="1">
    <location>
        <begin position="1391"/>
        <end position="1403"/>
    </location>
</feature>
<feature type="disulfide bond" evidence="1">
    <location>
        <begin position="1397"/>
        <end position="1414"/>
    </location>
</feature>
<feature type="disulfide bond" evidence="1">
    <location>
        <begin position="1416"/>
        <end position="1425"/>
    </location>
</feature>
<feature type="disulfide bond" evidence="1">
    <location>
        <begin position="1449"/>
        <end position="1472"/>
    </location>
</feature>
<feature type="disulfide bond" evidence="1">
    <location>
        <begin position="1454"/>
        <end position="1467"/>
    </location>
</feature>
<feature type="disulfide bond" evidence="1">
    <location>
        <begin position="1463"/>
        <end position="1479"/>
    </location>
</feature>
<feature type="disulfide bond" evidence="1">
    <location>
        <begin position="1490"/>
        <end position="1514"/>
    </location>
</feature>
<feature type="disulfide bond" evidence="1">
    <location>
        <begin position="1496"/>
        <end position="1509"/>
    </location>
</feature>
<feature type="disulfide bond" evidence="1">
    <location>
        <begin position="1505"/>
        <end position="1521"/>
    </location>
</feature>
<feature type="disulfide bond" evidence="1">
    <location>
        <begin position="1536"/>
        <end position="1549"/>
    </location>
</feature>
<feature type="disulfide bond" evidence="1">
    <location>
        <begin position="1545"/>
        <end position="1561"/>
    </location>
</feature>
<feature type="cross-link" description="Glycyl lysine isopeptide (Lys-Gly) (interchain with G-Cter in ubiquitin)" evidence="3">
    <location>
        <position position="1749"/>
    </location>
</feature>
<feature type="sequence conflict" description="In Ref. 1; CAA40667." evidence="12" ref="1">
    <original>G</original>
    <variation>A</variation>
    <location>
        <position position="309"/>
    </location>
</feature>
<feature type="sequence conflict" description="In Ref. 1; CAA40667." evidence="12" ref="1">
    <original>E</original>
    <variation>D</variation>
    <location>
        <position position="334"/>
    </location>
</feature>
<feature type="sequence conflict" description="In Ref. 1; CAA40667." evidence="12" ref="1">
    <original>S</original>
    <variation>R</variation>
    <location>
        <position position="402"/>
    </location>
</feature>
<feature type="sequence conflict" description="In Ref. 1; CAA40667." evidence="12" ref="1">
    <original>Y</original>
    <variation>I</variation>
    <location>
        <position position="577"/>
    </location>
</feature>
<feature type="sequence conflict" description="In Ref. 1; CAA40667." evidence="12" ref="1">
    <original>S</original>
    <variation>T</variation>
    <location>
        <position position="951"/>
    </location>
</feature>
<feature type="sequence conflict" description="In Ref. 1; CAA40667." evidence="12" ref="1">
    <original>G</original>
    <variation>R</variation>
    <location>
        <position position="1339"/>
    </location>
</feature>
<feature type="sequence conflict" description="In Ref. 1; CAA40667." evidence="12" ref="1">
    <original>G</original>
    <variation>A</variation>
    <location>
        <position position="1435"/>
    </location>
</feature>
<feature type="sequence conflict" description="In Ref. 1; CAA40667." evidence="12" ref="1">
    <original>EL</original>
    <variation>DV</variation>
    <location>
        <begin position="1595"/>
        <end position="1596"/>
    </location>
</feature>
<feature type="sequence conflict" description="In Ref. 1; CAA40667." evidence="12" ref="1">
    <original>P</original>
    <variation>R</variation>
    <location>
        <position position="2501"/>
    </location>
</feature>
<feature type="strand" evidence="17">
    <location>
        <begin position="301"/>
        <end position="303"/>
    </location>
</feature>
<feature type="turn" evidence="17">
    <location>
        <begin position="307"/>
        <end position="309"/>
    </location>
</feature>
<feature type="strand" evidence="17">
    <location>
        <begin position="311"/>
        <end position="314"/>
    </location>
</feature>
<feature type="strand" evidence="17">
    <location>
        <begin position="319"/>
        <end position="322"/>
    </location>
</feature>
<feature type="strand" evidence="17">
    <location>
        <begin position="327"/>
        <end position="331"/>
    </location>
</feature>
<feature type="strand" evidence="17">
    <location>
        <begin position="349"/>
        <end position="353"/>
    </location>
</feature>
<feature type="strand" evidence="17">
    <location>
        <begin position="356"/>
        <end position="360"/>
    </location>
</feature>
<feature type="strand" evidence="17">
    <location>
        <begin position="366"/>
        <end position="370"/>
    </location>
</feature>
<feature type="helix" evidence="17">
    <location>
        <begin position="375"/>
        <end position="378"/>
    </location>
</feature>
<feature type="strand" evidence="17">
    <location>
        <begin position="386"/>
        <end position="389"/>
    </location>
</feature>
<feature type="turn" evidence="17">
    <location>
        <begin position="391"/>
        <end position="393"/>
    </location>
</feature>
<feature type="strand" evidence="17">
    <location>
        <begin position="396"/>
        <end position="399"/>
    </location>
</feature>
<feature type="strand" evidence="17">
    <location>
        <begin position="404"/>
        <end position="406"/>
    </location>
</feature>
<feature type="helix" evidence="16">
    <location>
        <begin position="415"/>
        <end position="418"/>
    </location>
</feature>
<feature type="turn" evidence="16">
    <location>
        <begin position="424"/>
        <end position="426"/>
    </location>
</feature>
<feature type="strand" evidence="16">
    <location>
        <begin position="428"/>
        <end position="432"/>
    </location>
</feature>
<feature type="strand" evidence="16">
    <location>
        <begin position="435"/>
        <end position="439"/>
    </location>
</feature>
<feature type="strand" evidence="16">
    <location>
        <begin position="444"/>
        <end position="446"/>
    </location>
</feature>
<feature type="turn" evidence="16">
    <location>
        <begin position="455"/>
        <end position="458"/>
    </location>
</feature>
<feature type="strand" evidence="16">
    <location>
        <begin position="466"/>
        <end position="470"/>
    </location>
</feature>
<feature type="strand" evidence="16">
    <location>
        <begin position="473"/>
        <end position="477"/>
    </location>
</feature>
<feature type="strand" evidence="16">
    <location>
        <begin position="482"/>
        <end position="484"/>
    </location>
</feature>
<feature type="turn" evidence="16">
    <location>
        <begin position="493"/>
        <end position="496"/>
    </location>
</feature>
<feature type="strand" evidence="16">
    <location>
        <begin position="504"/>
        <end position="507"/>
    </location>
</feature>
<feature type="strand" evidence="16">
    <location>
        <begin position="512"/>
        <end position="515"/>
    </location>
</feature>
<feature type="turn" evidence="16">
    <location>
        <begin position="522"/>
        <end position="525"/>
    </location>
</feature>
<comment type="function">
    <text evidence="3 8">Functions as a receptor for membrane-bound ligands Jagged-1 (JAG1), Jagged-2 (JAG2) and Delta-1 (DLL1) to regulate cell-fate determination (By similarity). Upon ligand activation through the released notch intracellular domain (NICD) it forms a transcriptional activator complex with RBPJ/RBPSUH and activates genes of the enhancer of split locus (By similarity). Affects the implementation of differentiation, proliferation and apoptotic programs (By similarity). Involved in angiogenesis; negatively regulates endothelial cell proliferation and migration and angiogenic sprouting (By similarity). Involved in the maturation of both CD4(+) and CD8(+) cells in the thymus (By similarity). Important for follicular differentiation and possibly cell fate selection within the follicle (By similarity). During cerebellar development, functions as a receptor for neuronal DNER and is involved in the differentiation of Bergmann glia (PubMed:11182080). Represses neuronal and myogenic differentiation (By similarity). May play an essential role in postimplantation development, probably in some aspect of cell specification and/or differentiation (By similarity). May be involved in mesoderm development, somite formation and neurogenesis (By similarity). May enhance HIF1A function by sequestering HIF1AN away from HIF1A (By similarity). Required for the THBS4 function in regulating protective astrogenesis from the subventricular zone (SVZ) niche after injury (By similarity). Involved in determination of left/right symmetry by modulating the balance between motile and immotile (sensory) cilia at the left-right organiser (LRO) (By similarity).</text>
</comment>
<comment type="subunit">
    <text evidence="2 3 11">Heterodimer of a C-terminal fragment N(TM) and an N-terminal fragment N(EC) which are probably linked by disulfide bonds. Interacts with DNER, DTX1, DTX2 and RBPJ/RBPSUH. Also interacts with MAML1, MAML2 and MAML3 which act as transcriptional coactivators for NOTCH1. Notch 1 intracellular domain interacts with SNW1; the interaction involves multimerized NOTCH1 NICD and is implicated in a formation of an intermediate preactivation complex which associates with DNA-bound CBF-1/RBPJ. The activated membrane-bound form interacts with AAK1 which promotes NOTCH1 stabilization. Forms a trimeric complex with FBXW7 and SGK1. Interacts with HIF1AN. HIF1AN negatively regulates the function of notch intracellular domain (NICD), accelerating myogenic differentiation. Interacts (via NICD) with SNAI1 (via zinc fingers); the interaction induces SNAI1 degradation via MDM2-mediated ubiquitination and inhibits SNAI1-induced cell invasion. Interacts (via NICD) with MDM2A. Interacts (via NICD) with BCL6; the interaction decreases MAML1 recruitment by NOTCH1 NICD on target genes DNA and inhibits NOTCH1 transactivation activity (By similarity). Interacts with THBS4 (By similarity). Interacts (via the EGF-like repeat region) with CCN3 (via CTCK domain) (By similarity). Interacts (via EGF-like domains) with DLL4 (via N-terminal DSL and MNNL domains) (PubMed:25700513). Interacts with ZMIZ1 (By similarity). Interacts (via NICD domain) with MEGF10 (via the cytoplasmic domain). Interacts with DLL1 and JAG1 (By similarity). Interacts (via NICD domain) with PRAG1 (By similarity). Forms a complex with PRAG1, N1ICD and MAML1, in a MAML1-dependent manner (By similarity). Interacts (via transmembrane region) with PSEN1; the interaction is direct (By similarity). Interacts with ZFP64 (By similarity).</text>
</comment>
<comment type="subcellular location">
    <subcellularLocation>
        <location evidence="3">Cell membrane</location>
        <topology evidence="3">Single-pass type I membrane protein</topology>
    </subcellularLocation>
    <subcellularLocation>
        <location evidence="3">Late endosome membrane</location>
        <topology evidence="3">Single-pass type I membrane protein</topology>
    </subcellularLocation>
    <text evidence="3">Non-activated receptor is targeted for lysosomal degradation via the endosomal pathway; transport from late endosomes to lysosomes requires deuibiquitination by USP12.</text>
</comment>
<comment type="subcellular location">
    <molecule>Notch 1 intracellular domain</molecule>
    <subcellularLocation>
        <location evidence="3">Nucleus</location>
    </subcellularLocation>
    <text evidence="3">Following proteolytical processing NICD is translocated to the nucleus. Nuclear location may require MEGF10.</text>
</comment>
<comment type="tissue specificity">
    <text evidence="9 10">Expressed in the brain, kidney and spleen. Expressed in postnatal central nervous system (CNS) germinal zones and, in early postnatal life, within numerous cells throughout the CNS. Found in both subventricular and ventricular germinal zones.</text>
</comment>
<comment type="developmental stage">
    <text>In the embryo, highest levels occur between days 12 and 14 and decrease rapidly to much lower levels in the adult.</text>
</comment>
<comment type="domain">
    <text evidence="2">Interaction with PSEN1 causes partial unwinding of the transmembrane helix, facilitating access to the scissile peptide bond.</text>
</comment>
<comment type="PTM">
    <text evidence="3">Synthesized in the endoplasmic reticulum as an inactive form which is proteolytically cleaved by a furin-like convertase in the trans-Golgi network before it reaches the plasma membrane to yield an active, ligand-accessible form. Cleavage results in a C-terminal fragment N(TM) and a N-terminal fragment N(EC). Following ligand binding, it is cleaved by ADAM17 to yield a membrane-associated intermediate fragment called notch extracellular truncation (NEXT). Following endocytosis, this fragment is then cleaved by one of the catalytic subunits of gamma-secretase (PSEN1 or PSEN2) to release a Notch-derived peptide containing the intracellular domain (NICD) from the membrane.</text>
</comment>
<comment type="PTM">
    <text evidence="1">Phosphorylated.</text>
</comment>
<comment type="PTM">
    <text evidence="2 3 11">O-glycosylated on the EGF-like domains. O-glucosylated at Ser-435 by KDELC1 and KDELC2 (By similarity). Contains both O-linked fucose and O-linked glucose in the EGF-like domains 11, 12 and 13, which are interacting with the residues on DLL4 (PubMed:25700513). O-linked glycosylation by GALNT11 is involved in determination of left/right symmetry: glycosylation promotes activation of NOTCH1, possibly by promoting cleavage by ADAM17, modulating the balance between motile and immotile (sensory) cilia at the left-right organiser (LRO). MFNG-, RFNG- and LFNG-mediated modification of O-fucose residues at specific EGF-like domains results in inhibition of its activation by JAG1 and enhancement of its activation by DLL1 via an increased binding to DLL1 (By similarity).</text>
</comment>
<comment type="PTM">
    <text evidence="3">Ubiquitinated. Undergoes 'Lys-29'-linked polyubiquitination by ITCH; promotes the lysosomal degradation of non-activated internalized NOTCH1 (By similarity). Deubiquitination by USP12 is required for transport of internalized non-activated receptor from late endosomes to lysosomes for degradation (By similarity). Monoubiquitination at Lys-1749 is required for activation by gamma-secretase cleavage, it promotes interaction with AAK1, which stabilizes it. Deubiquitination by EIF3F is necessary for nuclear import of activated Notch (By similarity).</text>
</comment>
<comment type="PTM">
    <text evidence="1">Hydroxylated at Asn-1945 and Asn-2012 by HIF1AN. Hydroxylation reduces affinity for HI1AN and may thus indirectly modulate negative regulation of NICD (By similarity).</text>
</comment>
<comment type="similarity">
    <text evidence="12">Belongs to the NOTCH family.</text>
</comment>
<keyword id="KW-0002">3D-structure</keyword>
<keyword id="KW-0010">Activator</keyword>
<keyword id="KW-0037">Angiogenesis</keyword>
<keyword id="KW-0040">ANK repeat</keyword>
<keyword id="KW-0106">Calcium</keyword>
<keyword id="KW-1003">Cell membrane</keyword>
<keyword id="KW-0217">Developmental protein</keyword>
<keyword id="KW-0221">Differentiation</keyword>
<keyword id="KW-1015">Disulfide bond</keyword>
<keyword id="KW-0245">EGF-like domain</keyword>
<keyword id="KW-0967">Endosome</keyword>
<keyword id="KW-0325">Glycoprotein</keyword>
<keyword id="KW-0379">Hydroxylation</keyword>
<keyword id="KW-1017">Isopeptide bond</keyword>
<keyword id="KW-0472">Membrane</keyword>
<keyword id="KW-0479">Metal-binding</keyword>
<keyword id="KW-0914">Notch signaling pathway</keyword>
<keyword id="KW-0539">Nucleus</keyword>
<keyword id="KW-0597">Phosphoprotein</keyword>
<keyword id="KW-0675">Receptor</keyword>
<keyword id="KW-1185">Reference proteome</keyword>
<keyword id="KW-0677">Repeat</keyword>
<keyword id="KW-0732">Signal</keyword>
<keyword id="KW-0804">Transcription</keyword>
<keyword id="KW-0805">Transcription regulation</keyword>
<keyword id="KW-0812">Transmembrane</keyword>
<keyword id="KW-1133">Transmembrane helix</keyword>
<keyword id="KW-0832">Ubl conjugation</keyword>
<dbReference type="EMBL" id="X57405">
    <property type="protein sequence ID" value="CAA40667.1"/>
    <property type="molecule type" value="mRNA"/>
</dbReference>
<dbReference type="EMBL" id="AABR06021907">
    <property type="status" value="NOT_ANNOTATED_CDS"/>
    <property type="molecule type" value="Genomic_DNA"/>
</dbReference>
<dbReference type="EMBL" id="AABR06021908">
    <property type="status" value="NOT_ANNOTATED_CDS"/>
    <property type="molecule type" value="Genomic_DNA"/>
</dbReference>
<dbReference type="EMBL" id="CH474001">
    <property type="protein sequence ID" value="EDL93491.1"/>
    <property type="molecule type" value="Genomic_DNA"/>
</dbReference>
<dbReference type="PIR" id="S18188">
    <property type="entry name" value="S18188"/>
</dbReference>
<dbReference type="RefSeq" id="NP_001099191.1">
    <property type="nucleotide sequence ID" value="NM_001105721.1"/>
</dbReference>
<dbReference type="PDB" id="4XL1">
    <property type="method" value="X-ray"/>
    <property type="resolution" value="2.30 A"/>
    <property type="chains" value="A/D=412-526"/>
</dbReference>
<dbReference type="PDB" id="4XLW">
    <property type="method" value="X-ray"/>
    <property type="resolution" value="3.39 A"/>
    <property type="chains" value="A/C/E/G=412-526"/>
</dbReference>
<dbReference type="PDB" id="5UK5">
    <property type="method" value="X-ray"/>
    <property type="resolution" value="2.51 A"/>
    <property type="chains" value="A=295-488"/>
</dbReference>
<dbReference type="PDBsum" id="4XL1"/>
<dbReference type="PDBsum" id="4XLW"/>
<dbReference type="PDBsum" id="5UK5"/>
<dbReference type="SMR" id="Q07008"/>
<dbReference type="BioGRID" id="247529">
    <property type="interactions" value="1"/>
</dbReference>
<dbReference type="FunCoup" id="Q07008">
    <property type="interactions" value="1153"/>
</dbReference>
<dbReference type="IntAct" id="Q07008">
    <property type="interactions" value="3"/>
</dbReference>
<dbReference type="STRING" id="10116.ENSRNOP00000026212"/>
<dbReference type="GlyCosmos" id="Q07008">
    <property type="glycosylation" value="47 sites, No reported glycans"/>
</dbReference>
<dbReference type="GlyGen" id="Q07008">
    <property type="glycosylation" value="50 sites"/>
</dbReference>
<dbReference type="iPTMnet" id="Q07008"/>
<dbReference type="PhosphoSitePlus" id="Q07008"/>
<dbReference type="PaxDb" id="10116-ENSRNOP00000026212"/>
<dbReference type="Ensembl" id="ENSRNOT00000026212.8">
    <property type="protein sequence ID" value="ENSRNOP00000026212.6"/>
    <property type="gene ID" value="ENSRNOG00000019322.8"/>
</dbReference>
<dbReference type="GeneID" id="25496"/>
<dbReference type="KEGG" id="rno:25496"/>
<dbReference type="UCSC" id="RGD:3187">
    <property type="organism name" value="rat"/>
</dbReference>
<dbReference type="AGR" id="RGD:3187"/>
<dbReference type="CTD" id="4851"/>
<dbReference type="RGD" id="3187">
    <property type="gene designation" value="Notch1"/>
</dbReference>
<dbReference type="eggNOG" id="KOG1217">
    <property type="taxonomic scope" value="Eukaryota"/>
</dbReference>
<dbReference type="GeneTree" id="ENSGT00940000157157"/>
<dbReference type="HOGENOM" id="CLU_000576_0_0_1"/>
<dbReference type="InParanoid" id="Q07008"/>
<dbReference type="OMA" id="TCHEQRD"/>
<dbReference type="OrthoDB" id="3710at9989"/>
<dbReference type="TreeFam" id="TF351641"/>
<dbReference type="EvolutionaryTrace" id="Q07008"/>
<dbReference type="PRO" id="PR:Q07008"/>
<dbReference type="Proteomes" id="UP000002494">
    <property type="component" value="Chromosome 3"/>
</dbReference>
<dbReference type="Proteomes" id="UP000234681">
    <property type="component" value="Chromosome 3"/>
</dbReference>
<dbReference type="Bgee" id="ENSRNOG00000019322">
    <property type="expression patterns" value="Expressed in lung and 19 other cell types or tissues"/>
</dbReference>
<dbReference type="GO" id="GO:0001669">
    <property type="term" value="C:acrosomal vesicle"/>
    <property type="evidence" value="ECO:0000314"/>
    <property type="project" value="RGD"/>
</dbReference>
<dbReference type="GO" id="GO:0005912">
    <property type="term" value="C:adherens junction"/>
    <property type="evidence" value="ECO:0000250"/>
    <property type="project" value="UniProtKB"/>
</dbReference>
<dbReference type="GO" id="GO:0016324">
    <property type="term" value="C:apical plasma membrane"/>
    <property type="evidence" value="ECO:0000250"/>
    <property type="project" value="UniProtKB"/>
</dbReference>
<dbReference type="GO" id="GO:0071944">
    <property type="term" value="C:cell periphery"/>
    <property type="evidence" value="ECO:0000266"/>
    <property type="project" value="RGD"/>
</dbReference>
<dbReference type="GO" id="GO:0009986">
    <property type="term" value="C:cell surface"/>
    <property type="evidence" value="ECO:0000266"/>
    <property type="project" value="RGD"/>
</dbReference>
<dbReference type="GO" id="GO:0005737">
    <property type="term" value="C:cytoplasm"/>
    <property type="evidence" value="ECO:0000266"/>
    <property type="project" value="RGD"/>
</dbReference>
<dbReference type="GO" id="GO:0031410">
    <property type="term" value="C:cytoplasmic vesicle"/>
    <property type="evidence" value="ECO:0000266"/>
    <property type="project" value="RGD"/>
</dbReference>
<dbReference type="GO" id="GO:0005856">
    <property type="term" value="C:cytoskeleton"/>
    <property type="evidence" value="ECO:0000250"/>
    <property type="project" value="UniProtKB"/>
</dbReference>
<dbReference type="GO" id="GO:0005783">
    <property type="term" value="C:endoplasmic reticulum"/>
    <property type="evidence" value="ECO:0000266"/>
    <property type="project" value="RGD"/>
</dbReference>
<dbReference type="GO" id="GO:0098978">
    <property type="term" value="C:glutamatergic synapse"/>
    <property type="evidence" value="ECO:0000266"/>
    <property type="project" value="RGD"/>
</dbReference>
<dbReference type="GO" id="GO:0030027">
    <property type="term" value="C:lamellipodium"/>
    <property type="evidence" value="ECO:0000250"/>
    <property type="project" value="UniProtKB"/>
</dbReference>
<dbReference type="GO" id="GO:0031902">
    <property type="term" value="C:late endosome membrane"/>
    <property type="evidence" value="ECO:0007669"/>
    <property type="project" value="UniProtKB-SubCell"/>
</dbReference>
<dbReference type="GO" id="GO:0002193">
    <property type="term" value="C:MAML1-RBP-Jkappa- ICN1 complex"/>
    <property type="evidence" value="ECO:0000266"/>
    <property type="project" value="RGD"/>
</dbReference>
<dbReference type="GO" id="GO:0005634">
    <property type="term" value="C:nucleus"/>
    <property type="evidence" value="ECO:0000314"/>
    <property type="project" value="BHF-UCL"/>
</dbReference>
<dbReference type="GO" id="GO:0005886">
    <property type="term" value="C:plasma membrane"/>
    <property type="evidence" value="ECO:0000314"/>
    <property type="project" value="BHF-UCL"/>
</dbReference>
<dbReference type="GO" id="GO:0098839">
    <property type="term" value="C:postsynaptic density membrane"/>
    <property type="evidence" value="ECO:0000266"/>
    <property type="project" value="RGD"/>
</dbReference>
<dbReference type="GO" id="GO:0043235">
    <property type="term" value="C:receptor complex"/>
    <property type="evidence" value="ECO:0000266"/>
    <property type="project" value="RGD"/>
</dbReference>
<dbReference type="GO" id="GO:0001726">
    <property type="term" value="C:ruffle"/>
    <property type="evidence" value="ECO:0000250"/>
    <property type="project" value="UniProtKB"/>
</dbReference>
<dbReference type="GO" id="GO:0098685">
    <property type="term" value="C:Schaffer collateral - CA1 synapse"/>
    <property type="evidence" value="ECO:0000266"/>
    <property type="project" value="RGD"/>
</dbReference>
<dbReference type="GO" id="GO:0005509">
    <property type="term" value="F:calcium ion binding"/>
    <property type="evidence" value="ECO:0007669"/>
    <property type="project" value="InterPro"/>
</dbReference>
<dbReference type="GO" id="GO:0003682">
    <property type="term" value="F:chromatin binding"/>
    <property type="evidence" value="ECO:0000266"/>
    <property type="project" value="RGD"/>
</dbReference>
<dbReference type="GO" id="GO:0031490">
    <property type="term" value="F:chromatin DNA binding"/>
    <property type="evidence" value="ECO:0000266"/>
    <property type="project" value="RGD"/>
</dbReference>
<dbReference type="GO" id="GO:0000987">
    <property type="term" value="F:cis-regulatory region sequence-specific DNA binding"/>
    <property type="evidence" value="ECO:0000266"/>
    <property type="project" value="RGD"/>
</dbReference>
<dbReference type="GO" id="GO:0001228">
    <property type="term" value="F:DNA-binding transcription activator activity, RNA polymerase II-specific"/>
    <property type="evidence" value="ECO:0000266"/>
    <property type="project" value="RGD"/>
</dbReference>
<dbReference type="GO" id="GO:0019899">
    <property type="term" value="F:enzyme binding"/>
    <property type="evidence" value="ECO:0000250"/>
    <property type="project" value="UniProtKB"/>
</dbReference>
<dbReference type="GO" id="GO:0004857">
    <property type="term" value="F:enzyme inhibitor activity"/>
    <property type="evidence" value="ECO:0000250"/>
    <property type="project" value="UniProtKB"/>
</dbReference>
<dbReference type="GO" id="GO:0042802">
    <property type="term" value="F:identical protein binding"/>
    <property type="evidence" value="ECO:0000266"/>
    <property type="project" value="RGD"/>
</dbReference>
<dbReference type="GO" id="GO:0005112">
    <property type="term" value="F:Notch binding"/>
    <property type="evidence" value="ECO:0000266"/>
    <property type="project" value="RGD"/>
</dbReference>
<dbReference type="GO" id="GO:0003713">
    <property type="term" value="F:transcription coactivator activity"/>
    <property type="evidence" value="ECO:0000266"/>
    <property type="project" value="RGD"/>
</dbReference>
<dbReference type="GO" id="GO:0140537">
    <property type="term" value="F:transcription regulator activator activity"/>
    <property type="evidence" value="ECO:0000266"/>
    <property type="project" value="RGD"/>
</dbReference>
<dbReference type="GO" id="GO:0004888">
    <property type="term" value="F:transmembrane signaling receptor activity"/>
    <property type="evidence" value="ECO:0000314"/>
    <property type="project" value="WormBase"/>
</dbReference>
<dbReference type="GO" id="GO:0031100">
    <property type="term" value="P:animal organ regeneration"/>
    <property type="evidence" value="ECO:0000270"/>
    <property type="project" value="RGD"/>
</dbReference>
<dbReference type="GO" id="GO:0003180">
    <property type="term" value="P:aortic valve morphogenesis"/>
    <property type="evidence" value="ECO:0000266"/>
    <property type="project" value="RGD"/>
</dbReference>
<dbReference type="GO" id="GO:0006915">
    <property type="term" value="P:apoptotic process"/>
    <property type="evidence" value="ECO:0000266"/>
    <property type="project" value="RGD"/>
</dbReference>
<dbReference type="GO" id="GO:1902263">
    <property type="term" value="P:apoptotic process involved in embryonic digit morphogenesis"/>
    <property type="evidence" value="ECO:0000266"/>
    <property type="project" value="RGD"/>
</dbReference>
<dbReference type="GO" id="GO:0060842">
    <property type="term" value="P:arterial endothelial cell differentiation"/>
    <property type="evidence" value="ECO:0000266"/>
    <property type="project" value="RGD"/>
</dbReference>
<dbReference type="GO" id="GO:0048708">
    <property type="term" value="P:astrocyte differentiation"/>
    <property type="evidence" value="ECO:0000314"/>
    <property type="project" value="RGD"/>
</dbReference>
<dbReference type="GO" id="GO:0003162">
    <property type="term" value="P:atrioventricular node development"/>
    <property type="evidence" value="ECO:0000266"/>
    <property type="project" value="RGD"/>
</dbReference>
<dbReference type="GO" id="GO:0003181">
    <property type="term" value="P:atrioventricular valve morphogenesis"/>
    <property type="evidence" value="ECO:0000266"/>
    <property type="project" value="RGD"/>
</dbReference>
<dbReference type="GO" id="GO:0009912">
    <property type="term" value="P:auditory receptor cell fate commitment"/>
    <property type="evidence" value="ECO:0000266"/>
    <property type="project" value="RGD"/>
</dbReference>
<dbReference type="GO" id="GO:0007409">
    <property type="term" value="P:axonogenesis"/>
    <property type="evidence" value="ECO:0000266"/>
    <property type="project" value="RGD"/>
</dbReference>
<dbReference type="GO" id="GO:0048754">
    <property type="term" value="P:branching morphogenesis of an epithelial tube"/>
    <property type="evidence" value="ECO:0000266"/>
    <property type="project" value="RGD"/>
</dbReference>
<dbReference type="GO" id="GO:0017156">
    <property type="term" value="P:calcium-ion regulated exocytosis"/>
    <property type="evidence" value="ECO:0000266"/>
    <property type="project" value="RGD"/>
</dbReference>
<dbReference type="GO" id="GO:0003209">
    <property type="term" value="P:cardiac atrium morphogenesis"/>
    <property type="evidence" value="ECO:0000266"/>
    <property type="project" value="RGD"/>
</dbReference>
<dbReference type="GO" id="GO:0003207">
    <property type="term" value="P:cardiac chamber formation"/>
    <property type="evidence" value="ECO:0000266"/>
    <property type="project" value="RGD"/>
</dbReference>
<dbReference type="GO" id="GO:0060317">
    <property type="term" value="P:cardiac epithelial to mesenchymal transition"/>
    <property type="evidence" value="ECO:0000266"/>
    <property type="project" value="RGD"/>
</dbReference>
<dbReference type="GO" id="GO:0003214">
    <property type="term" value="P:cardiac left ventricle morphogenesis"/>
    <property type="evidence" value="ECO:0000266"/>
    <property type="project" value="RGD"/>
</dbReference>
<dbReference type="GO" id="GO:0060379">
    <property type="term" value="P:cardiac muscle cell myoblast differentiation"/>
    <property type="evidence" value="ECO:0000266"/>
    <property type="project" value="RGD"/>
</dbReference>
<dbReference type="GO" id="GO:0060038">
    <property type="term" value="P:cardiac muscle cell proliferation"/>
    <property type="evidence" value="ECO:0000266"/>
    <property type="project" value="RGD"/>
</dbReference>
<dbReference type="GO" id="GO:0055008">
    <property type="term" value="P:cardiac muscle tissue morphogenesis"/>
    <property type="evidence" value="ECO:0000266"/>
    <property type="project" value="RGD"/>
</dbReference>
<dbReference type="GO" id="GO:0003213">
    <property type="term" value="P:cardiac right atrium morphogenesis"/>
    <property type="evidence" value="ECO:0000266"/>
    <property type="project" value="RGD"/>
</dbReference>
<dbReference type="GO" id="GO:0003219">
    <property type="term" value="P:cardiac right ventricle formation"/>
    <property type="evidence" value="ECO:0000266"/>
    <property type="project" value="RGD"/>
</dbReference>
<dbReference type="GO" id="GO:0060411">
    <property type="term" value="P:cardiac septum morphogenesis"/>
    <property type="evidence" value="ECO:0000266"/>
    <property type="project" value="RGD"/>
</dbReference>
<dbReference type="GO" id="GO:0060948">
    <property type="term" value="P:cardiac vascular smooth muscle cell development"/>
    <property type="evidence" value="ECO:0000266"/>
    <property type="project" value="RGD"/>
</dbReference>
<dbReference type="GO" id="GO:0003208">
    <property type="term" value="P:cardiac ventricle morphogenesis"/>
    <property type="evidence" value="ECO:0000266"/>
    <property type="project" value="RGD"/>
</dbReference>
<dbReference type="GO" id="GO:0030154">
    <property type="term" value="P:cell differentiation"/>
    <property type="evidence" value="ECO:0000266"/>
    <property type="project" value="RGD"/>
</dbReference>
<dbReference type="GO" id="GO:0021515">
    <property type="term" value="P:cell differentiation in spinal cord"/>
    <property type="evidence" value="ECO:0000270"/>
    <property type="project" value="RGD"/>
</dbReference>
<dbReference type="GO" id="GO:0003273">
    <property type="term" value="P:cell migration involved in endocardial cushion formation"/>
    <property type="evidence" value="ECO:0000266"/>
    <property type="project" value="RGD"/>
</dbReference>
<dbReference type="GO" id="GO:0008283">
    <property type="term" value="P:cell population proliferation"/>
    <property type="evidence" value="ECO:0000266"/>
    <property type="project" value="RGD"/>
</dbReference>
<dbReference type="GO" id="GO:0071372">
    <property type="term" value="P:cellular response to follicle-stimulating hormone stimulus"/>
    <property type="evidence" value="ECO:0000266"/>
    <property type="project" value="RGD"/>
</dbReference>
<dbReference type="GO" id="GO:0071456">
    <property type="term" value="P:cellular response to hypoxia"/>
    <property type="evidence" value="ECO:0000250"/>
    <property type="project" value="UniProtKB"/>
</dbReference>
<dbReference type="GO" id="GO:0071228">
    <property type="term" value="P:cellular response to tumor cell"/>
    <property type="evidence" value="ECO:0000266"/>
    <property type="project" value="RGD"/>
</dbReference>
<dbReference type="GO" id="GO:0035924">
    <property type="term" value="P:cellular response to vascular endothelial growth factor stimulus"/>
    <property type="evidence" value="ECO:0000250"/>
    <property type="project" value="UniProtKB"/>
</dbReference>
<dbReference type="GO" id="GO:0021953">
    <property type="term" value="P:central nervous system neuron differentiation"/>
    <property type="evidence" value="ECO:0007669"/>
    <property type="project" value="Ensembl"/>
</dbReference>
<dbReference type="GO" id="GO:0099565">
    <property type="term" value="P:chemical synaptic transmission, postsynaptic"/>
    <property type="evidence" value="ECO:0000266"/>
    <property type="project" value="RGD"/>
</dbReference>
<dbReference type="GO" id="GO:0060271">
    <property type="term" value="P:cilium assembly"/>
    <property type="evidence" value="ECO:0000250"/>
    <property type="project" value="UniProtKB"/>
</dbReference>
<dbReference type="GO" id="GO:0072044">
    <property type="term" value="P:collecting duct development"/>
    <property type="evidence" value="ECO:0000266"/>
    <property type="project" value="RGD"/>
</dbReference>
<dbReference type="GO" id="GO:0007386">
    <property type="term" value="P:compartment pattern specification"/>
    <property type="evidence" value="ECO:0000266"/>
    <property type="project" value="RGD"/>
</dbReference>
<dbReference type="GO" id="GO:0060982">
    <property type="term" value="P:coronary artery morphogenesis"/>
    <property type="evidence" value="ECO:0000266"/>
    <property type="project" value="RGD"/>
</dbReference>
<dbReference type="GO" id="GO:0003182">
    <property type="term" value="P:coronary sinus valve morphogenesis"/>
    <property type="evidence" value="ECO:0000266"/>
    <property type="project" value="RGD"/>
</dbReference>
<dbReference type="GO" id="GO:0003169">
    <property type="term" value="P:coronary vein morphogenesis"/>
    <property type="evidence" value="ECO:0000266"/>
    <property type="project" value="RGD"/>
</dbReference>
<dbReference type="GO" id="GO:0007368">
    <property type="term" value="P:determination of left/right symmetry"/>
    <property type="evidence" value="ECO:0000266"/>
    <property type="project" value="RGD"/>
</dbReference>
<dbReference type="GO" id="GO:0072017">
    <property type="term" value="P:distal tubule development"/>
    <property type="evidence" value="ECO:0000266"/>
    <property type="project" value="RGD"/>
</dbReference>
<dbReference type="GO" id="GO:0035116">
    <property type="term" value="P:embryonic hindlimb morphogenesis"/>
    <property type="evidence" value="ECO:0000266"/>
    <property type="project" value="RGD"/>
</dbReference>
<dbReference type="GO" id="GO:0030326">
    <property type="term" value="P:embryonic limb morphogenesis"/>
    <property type="evidence" value="ECO:0000266"/>
    <property type="project" value="RGD"/>
</dbReference>
<dbReference type="GO" id="GO:0060956">
    <property type="term" value="P:endocardial cell differentiation"/>
    <property type="evidence" value="ECO:0000266"/>
    <property type="project" value="RGD"/>
</dbReference>
<dbReference type="GO" id="GO:0003197">
    <property type="term" value="P:endocardial cushion development"/>
    <property type="evidence" value="ECO:0000266"/>
    <property type="project" value="RGD"/>
</dbReference>
<dbReference type="GO" id="GO:0003203">
    <property type="term" value="P:endocardial cushion morphogenesis"/>
    <property type="evidence" value="ECO:0000266"/>
    <property type="project" value="RGD"/>
</dbReference>
<dbReference type="GO" id="GO:0003157">
    <property type="term" value="P:endocardium development"/>
    <property type="evidence" value="ECO:0000266"/>
    <property type="project" value="RGD"/>
</dbReference>
<dbReference type="GO" id="GO:0003160">
    <property type="term" value="P:endocardium morphogenesis"/>
    <property type="evidence" value="ECO:0000266"/>
    <property type="project" value="RGD"/>
</dbReference>
<dbReference type="GO" id="GO:0007492">
    <property type="term" value="P:endoderm development"/>
    <property type="evidence" value="ECO:0000266"/>
    <property type="project" value="RGD"/>
</dbReference>
<dbReference type="GO" id="GO:0009957">
    <property type="term" value="P:epidermal cell fate specification"/>
    <property type="evidence" value="ECO:0000266"/>
    <property type="project" value="RGD"/>
</dbReference>
<dbReference type="GO" id="GO:0008544">
    <property type="term" value="P:epidermis development"/>
    <property type="evidence" value="ECO:0000266"/>
    <property type="project" value="RGD"/>
</dbReference>
<dbReference type="GO" id="GO:0072148">
    <property type="term" value="P:epithelial cell fate commitment"/>
    <property type="evidence" value="ECO:0000266"/>
    <property type="project" value="RGD"/>
</dbReference>
<dbReference type="GO" id="GO:0050673">
    <property type="term" value="P:epithelial cell proliferation"/>
    <property type="evidence" value="ECO:0000266"/>
    <property type="project" value="RGD"/>
</dbReference>
<dbReference type="GO" id="GO:0001837">
    <property type="term" value="P:epithelial to mesenchymal transition"/>
    <property type="evidence" value="ECO:0000266"/>
    <property type="project" value="RGD"/>
</dbReference>
<dbReference type="GO" id="GO:0003198">
    <property type="term" value="P:epithelial to mesenchymal transition involved in endocardial cushion formation"/>
    <property type="evidence" value="ECO:0000266"/>
    <property type="project" value="RGD"/>
</dbReference>
<dbReference type="GO" id="GO:0030900">
    <property type="term" value="P:forebrain development"/>
    <property type="evidence" value="ECO:0000266"/>
    <property type="project" value="RGD"/>
</dbReference>
<dbReference type="GO" id="GO:0007440">
    <property type="term" value="P:foregut morphogenesis"/>
    <property type="evidence" value="ECO:0000266"/>
    <property type="project" value="RGD"/>
</dbReference>
<dbReference type="GO" id="GO:0010467">
    <property type="term" value="P:gene expression"/>
    <property type="evidence" value="ECO:0000266"/>
    <property type="project" value="RGD"/>
</dbReference>
<dbReference type="GO" id="GO:0010001">
    <property type="term" value="P:glial cell differentiation"/>
    <property type="evidence" value="ECO:0000266"/>
    <property type="project" value="RGD"/>
</dbReference>
<dbReference type="GO" id="GO:0072144">
    <property type="term" value="P:glomerular mesangial cell development"/>
    <property type="evidence" value="ECO:0000266"/>
    <property type="project" value="RGD"/>
</dbReference>
<dbReference type="GO" id="GO:0003241">
    <property type="term" value="P:growth involved in heart morphogenesis"/>
    <property type="evidence" value="ECO:0000266"/>
    <property type="project" value="RGD"/>
</dbReference>
<dbReference type="GO" id="GO:0031069">
    <property type="term" value="P:hair follicle morphogenesis"/>
    <property type="evidence" value="ECO:0000266"/>
    <property type="project" value="RGD"/>
</dbReference>
<dbReference type="GO" id="GO:0007507">
    <property type="term" value="P:heart development"/>
    <property type="evidence" value="ECO:0000266"/>
    <property type="project" value="RGD"/>
</dbReference>
<dbReference type="GO" id="GO:0001947">
    <property type="term" value="P:heart looping"/>
    <property type="evidence" value="ECO:0000266"/>
    <property type="project" value="RGD"/>
</dbReference>
<dbReference type="GO" id="GO:0061384">
    <property type="term" value="P:heart trabecula morphogenesis"/>
    <property type="evidence" value="ECO:0000266"/>
    <property type="project" value="RGD"/>
</dbReference>
<dbReference type="GO" id="GO:0048873">
    <property type="term" value="P:homeostasis of number of cells within a tissue"/>
    <property type="evidence" value="ECO:0000266"/>
    <property type="project" value="RGD"/>
</dbReference>
<dbReference type="GO" id="GO:0006959">
    <property type="term" value="P:humoral immune response"/>
    <property type="evidence" value="ECO:0000266"/>
    <property type="project" value="RGD"/>
</dbReference>
<dbReference type="GO" id="GO:0001701">
    <property type="term" value="P:in utero embryonic development"/>
    <property type="evidence" value="ECO:0000266"/>
    <property type="project" value="RGD"/>
</dbReference>
<dbReference type="GO" id="GO:0002437">
    <property type="term" value="P:inflammatory response to antigenic stimulus"/>
    <property type="evidence" value="ECO:0000266"/>
    <property type="project" value="RGD"/>
</dbReference>
<dbReference type="GO" id="GO:0002085">
    <property type="term" value="P:inhibition of neuroepithelial cell differentiation"/>
    <property type="evidence" value="ECO:0000266"/>
    <property type="project" value="RGD"/>
</dbReference>
<dbReference type="GO" id="GO:0097400">
    <property type="term" value="P:interleukin-17-mediated signaling pathway"/>
    <property type="evidence" value="ECO:0000266"/>
    <property type="project" value="RGD"/>
</dbReference>
<dbReference type="GO" id="GO:0030216">
    <property type="term" value="P:keratinocyte differentiation"/>
    <property type="evidence" value="ECO:0000266"/>
    <property type="project" value="RGD"/>
</dbReference>
<dbReference type="GO" id="GO:0070986">
    <property type="term" value="P:left/right axis specification"/>
    <property type="evidence" value="ECO:0000266"/>
    <property type="project" value="RGD"/>
</dbReference>
<dbReference type="GO" id="GO:0001889">
    <property type="term" value="P:liver development"/>
    <property type="evidence" value="ECO:0000266"/>
    <property type="project" value="RGD"/>
</dbReference>
<dbReference type="GO" id="GO:0030324">
    <property type="term" value="P:lung development"/>
    <property type="evidence" value="ECO:0000266"/>
    <property type="project" value="RGD"/>
</dbReference>
<dbReference type="GO" id="GO:0001554">
    <property type="term" value="P:luteolysis"/>
    <property type="evidence" value="ECO:0000270"/>
    <property type="project" value="RGD"/>
</dbReference>
<dbReference type="GO" id="GO:0014031">
    <property type="term" value="P:mesenchymal cell development"/>
    <property type="evidence" value="ECO:0000266"/>
    <property type="project" value="RGD"/>
</dbReference>
<dbReference type="GO" id="GO:0003192">
    <property type="term" value="P:mitral valve formation"/>
    <property type="evidence" value="ECO:0000266"/>
    <property type="project" value="RGD"/>
</dbReference>
<dbReference type="GO" id="GO:2000811">
    <property type="term" value="P:negative regulation of anoikis"/>
    <property type="evidence" value="ECO:0000266"/>
    <property type="project" value="RGD"/>
</dbReference>
<dbReference type="GO" id="GO:0070168">
    <property type="term" value="P:negative regulation of biomineral tissue development"/>
    <property type="evidence" value="ECO:0000266"/>
    <property type="project" value="RGD"/>
</dbReference>
<dbReference type="GO" id="GO:0030514">
    <property type="term" value="P:negative regulation of BMP signaling pathway"/>
    <property type="evidence" value="ECO:0000266"/>
    <property type="project" value="RGD"/>
</dbReference>
<dbReference type="GO" id="GO:0045955">
    <property type="term" value="P:negative regulation of calcium ion-dependent exocytosis"/>
    <property type="evidence" value="ECO:0000266"/>
    <property type="project" value="RGD"/>
</dbReference>
<dbReference type="GO" id="GO:0090090">
    <property type="term" value="P:negative regulation of canonical Wnt signaling pathway"/>
    <property type="evidence" value="ECO:0000266"/>
    <property type="project" value="RGD"/>
</dbReference>
<dbReference type="GO" id="GO:0010667">
    <property type="term" value="P:negative regulation of cardiac muscle cell apoptotic process"/>
    <property type="evidence" value="ECO:0000315"/>
    <property type="project" value="RGD"/>
</dbReference>
<dbReference type="GO" id="GO:0010614">
    <property type="term" value="P:negative regulation of cardiac muscle hypertrophy"/>
    <property type="evidence" value="ECO:0000266"/>
    <property type="project" value="RGD"/>
</dbReference>
<dbReference type="GO" id="GO:0043086">
    <property type="term" value="P:negative regulation of catalytic activity"/>
    <property type="evidence" value="ECO:0000250"/>
    <property type="project" value="UniProtKB"/>
</dbReference>
<dbReference type="GO" id="GO:0060354">
    <property type="term" value="P:negative regulation of cell adhesion molecule production"/>
    <property type="evidence" value="ECO:0000266"/>
    <property type="project" value="RGD"/>
</dbReference>
<dbReference type="GO" id="GO:0090051">
    <property type="term" value="P:negative regulation of cell migration involved in sprouting angiogenesis"/>
    <property type="evidence" value="ECO:0000250"/>
    <property type="project" value="UniProtKB"/>
</dbReference>
<dbReference type="GO" id="GO:0008285">
    <property type="term" value="P:negative regulation of cell population proliferation"/>
    <property type="evidence" value="ECO:0000250"/>
    <property type="project" value="UniProtKB"/>
</dbReference>
<dbReference type="GO" id="GO:0003252">
    <property type="term" value="P:negative regulation of cell proliferation involved in heart valve morphogenesis"/>
    <property type="evidence" value="ECO:0000266"/>
    <property type="project" value="RGD"/>
</dbReference>
<dbReference type="GO" id="GO:2000048">
    <property type="term" value="P:negative regulation of cell-cell adhesion mediated by cadherin"/>
    <property type="evidence" value="ECO:0000266"/>
    <property type="project" value="RGD"/>
</dbReference>
<dbReference type="GO" id="GO:0010812">
    <property type="term" value="P:negative regulation of cell-substrate adhesion"/>
    <property type="evidence" value="ECO:0000266"/>
    <property type="project" value="RGD"/>
</dbReference>
<dbReference type="GO" id="GO:0120163">
    <property type="term" value="P:negative regulation of cold-induced thermogenesis"/>
    <property type="evidence" value="ECO:0000250"/>
    <property type="project" value="YuBioLab"/>
</dbReference>
<dbReference type="GO" id="GO:0032966">
    <property type="term" value="P:negative regulation of collagen biosynthetic process"/>
    <property type="evidence" value="ECO:0000315"/>
    <property type="project" value="RGD"/>
</dbReference>
<dbReference type="GO" id="GO:0045892">
    <property type="term" value="P:negative regulation of DNA-templated transcription"/>
    <property type="evidence" value="ECO:0000266"/>
    <property type="project" value="RGD"/>
</dbReference>
<dbReference type="GO" id="GO:2001027">
    <property type="term" value="P:negative regulation of endothelial cell chemotaxis"/>
    <property type="evidence" value="ECO:0000250"/>
    <property type="project" value="UniProtKB"/>
</dbReference>
<dbReference type="GO" id="GO:0050680">
    <property type="term" value="P:negative regulation of epithelial cell proliferation"/>
    <property type="evidence" value="ECO:0000266"/>
    <property type="project" value="RGD"/>
</dbReference>
<dbReference type="GO" id="GO:0003332">
    <property type="term" value="P:negative regulation of extracellular matrix constituent secretion"/>
    <property type="evidence" value="ECO:0000266"/>
    <property type="project" value="RGD"/>
</dbReference>
<dbReference type="GO" id="GO:0010629">
    <property type="term" value="P:negative regulation of gene expression"/>
    <property type="evidence" value="ECO:0000266"/>
    <property type="project" value="RGD"/>
</dbReference>
<dbReference type="GO" id="GO:0060253">
    <property type="term" value="P:negative regulation of glial cell proliferation"/>
    <property type="evidence" value="ECO:0000250"/>
    <property type="project" value="UniProtKB"/>
</dbReference>
<dbReference type="GO" id="GO:0045608">
    <property type="term" value="P:negative regulation of inner ear auditory receptor cell differentiation"/>
    <property type="evidence" value="ECO:0000266"/>
    <property type="project" value="RGD"/>
</dbReference>
<dbReference type="GO" id="GO:0045662">
    <property type="term" value="P:negative regulation of myoblast differentiation"/>
    <property type="evidence" value="ECO:0000266"/>
    <property type="project" value="RGD"/>
</dbReference>
<dbReference type="GO" id="GO:0010832">
    <property type="term" value="P:negative regulation of myotube differentiation"/>
    <property type="evidence" value="ECO:0000266"/>
    <property type="project" value="RGD"/>
</dbReference>
<dbReference type="GO" id="GO:0050768">
    <property type="term" value="P:negative regulation of neurogenesis"/>
    <property type="evidence" value="ECO:0000250"/>
    <property type="project" value="UniProtKB"/>
</dbReference>
<dbReference type="GO" id="GO:0045665">
    <property type="term" value="P:negative regulation of neuron differentiation"/>
    <property type="evidence" value="ECO:0000315"/>
    <property type="project" value="RGD"/>
</dbReference>
<dbReference type="GO" id="GO:0048715">
    <property type="term" value="P:negative regulation of oligodendrocyte differentiation"/>
    <property type="evidence" value="ECO:0000250"/>
    <property type="project" value="UniProtKB"/>
</dbReference>
<dbReference type="GO" id="GO:0030279">
    <property type="term" value="P:negative regulation of ossification"/>
    <property type="evidence" value="ECO:0000266"/>
    <property type="project" value="RGD"/>
</dbReference>
<dbReference type="GO" id="GO:0045668">
    <property type="term" value="P:negative regulation of osteoblast differentiation"/>
    <property type="evidence" value="ECO:0000266"/>
    <property type="project" value="RGD"/>
</dbReference>
<dbReference type="GO" id="GO:0046533">
    <property type="term" value="P:negative regulation of photoreceptor cell differentiation"/>
    <property type="evidence" value="ECO:0000266"/>
    <property type="project" value="RGD"/>
</dbReference>
<dbReference type="GO" id="GO:2000974">
    <property type="term" value="P:negative regulation of pro-B cell differentiation"/>
    <property type="evidence" value="ECO:0000250"/>
    <property type="project" value="UniProtKB"/>
</dbReference>
<dbReference type="GO" id="GO:0043069">
    <property type="term" value="P:negative regulation of programmed cell death"/>
    <property type="evidence" value="ECO:0000266"/>
    <property type="project" value="RGD"/>
</dbReference>
<dbReference type="GO" id="GO:2000737">
    <property type="term" value="P:negative regulation of stem cell differentiation"/>
    <property type="evidence" value="ECO:0000266"/>
    <property type="project" value="RGD"/>
</dbReference>
<dbReference type="GO" id="GO:0000122">
    <property type="term" value="P:negative regulation of transcription by RNA polymerase II"/>
    <property type="evidence" value="ECO:0000250"/>
    <property type="project" value="UniProtKB"/>
</dbReference>
<dbReference type="GO" id="GO:0021915">
    <property type="term" value="P:neural tube development"/>
    <property type="evidence" value="ECO:0000266"/>
    <property type="project" value="RGD"/>
</dbReference>
<dbReference type="GO" id="GO:0061101">
    <property type="term" value="P:neuroendocrine cell differentiation"/>
    <property type="evidence" value="ECO:0000266"/>
    <property type="project" value="RGD"/>
</dbReference>
<dbReference type="GO" id="GO:0030182">
    <property type="term" value="P:neuron differentiation"/>
    <property type="evidence" value="ECO:0000266"/>
    <property type="project" value="RGD"/>
</dbReference>
<dbReference type="GO" id="GO:0048663">
    <property type="term" value="P:neuron fate commitment"/>
    <property type="evidence" value="ECO:0000266"/>
    <property type="project" value="RGD"/>
</dbReference>
<dbReference type="GO" id="GO:0097150">
    <property type="term" value="P:neuronal stem cell population maintenance"/>
    <property type="evidence" value="ECO:0000266"/>
    <property type="project" value="RGD"/>
</dbReference>
<dbReference type="GO" id="GO:0061314">
    <property type="term" value="P:Notch signaling involved in heart development"/>
    <property type="evidence" value="ECO:0000250"/>
    <property type="project" value="UniProtKB"/>
</dbReference>
<dbReference type="GO" id="GO:0007219">
    <property type="term" value="P:Notch signaling pathway"/>
    <property type="evidence" value="ECO:0000314"/>
    <property type="project" value="WormBase"/>
</dbReference>
<dbReference type="GO" id="GO:0003270">
    <property type="term" value="P:Notch signaling pathway involved in regulation of secondary heart field cardioblast proliferation"/>
    <property type="evidence" value="ECO:0000266"/>
    <property type="project" value="RGD"/>
</dbReference>
<dbReference type="GO" id="GO:0048709">
    <property type="term" value="P:oligodendrocyte differentiation"/>
    <property type="evidence" value="ECO:0000270"/>
    <property type="project" value="RGD"/>
</dbReference>
<dbReference type="GO" id="GO:0003151">
    <property type="term" value="P:outflow tract morphogenesis"/>
    <property type="evidence" value="ECO:0000266"/>
    <property type="project" value="RGD"/>
</dbReference>
<dbReference type="GO" id="GO:0003344">
    <property type="term" value="P:pericardium morphogenesis"/>
    <property type="evidence" value="ECO:0000266"/>
    <property type="project" value="RGD"/>
</dbReference>
<dbReference type="GO" id="GO:1903849">
    <property type="term" value="P:positive regulation of aorta morphogenesis"/>
    <property type="evidence" value="ECO:0000266"/>
    <property type="project" value="RGD"/>
</dbReference>
<dbReference type="GO" id="GO:0043065">
    <property type="term" value="P:positive regulation of apoptotic process"/>
    <property type="evidence" value="ECO:0000266"/>
    <property type="project" value="RGD"/>
</dbReference>
<dbReference type="GO" id="GO:1902339">
    <property type="term" value="P:positive regulation of apoptotic process involved in morphogenesis"/>
    <property type="evidence" value="ECO:0000266"/>
    <property type="project" value="RGD"/>
</dbReference>
<dbReference type="GO" id="GO:0048711">
    <property type="term" value="P:positive regulation of astrocyte differentiation"/>
    <property type="evidence" value="ECO:0000250"/>
    <property type="project" value="UniProtKB"/>
</dbReference>
<dbReference type="GO" id="GO:0030513">
    <property type="term" value="P:positive regulation of BMP signaling pathway"/>
    <property type="evidence" value="ECO:0000250"/>
    <property type="project" value="UniProtKB"/>
</dbReference>
<dbReference type="GO" id="GO:0062043">
    <property type="term" value="P:positive regulation of cardiac epithelial to mesenchymal transition"/>
    <property type="evidence" value="ECO:0000316"/>
    <property type="project" value="BHF-UCL"/>
</dbReference>
<dbReference type="GO" id="GO:0060045">
    <property type="term" value="P:positive regulation of cardiac muscle cell proliferation"/>
    <property type="evidence" value="ECO:0000266"/>
    <property type="project" value="RGD"/>
</dbReference>
<dbReference type="GO" id="GO:0030335">
    <property type="term" value="P:positive regulation of cell migration"/>
    <property type="evidence" value="ECO:0000266"/>
    <property type="project" value="RGD"/>
</dbReference>
<dbReference type="GO" id="GO:0008284">
    <property type="term" value="P:positive regulation of cell population proliferation"/>
    <property type="evidence" value="ECO:0000266"/>
    <property type="project" value="RGD"/>
</dbReference>
<dbReference type="GO" id="GO:0045893">
    <property type="term" value="P:positive regulation of DNA-templated transcription"/>
    <property type="evidence" value="ECO:0000250"/>
    <property type="project" value="UniProtKB"/>
</dbReference>
<dbReference type="GO" id="GO:0045603">
    <property type="term" value="P:positive regulation of endothelial cell differentiation"/>
    <property type="evidence" value="ECO:0000315"/>
    <property type="project" value="RGD"/>
</dbReference>
<dbReference type="GO" id="GO:0050679">
    <property type="term" value="P:positive regulation of epithelial cell proliferation"/>
    <property type="evidence" value="ECO:0000266"/>
    <property type="project" value="RGD"/>
</dbReference>
<dbReference type="GO" id="GO:0010718">
    <property type="term" value="P:positive regulation of epithelial to mesenchymal transition"/>
    <property type="evidence" value="ECO:0000266"/>
    <property type="project" value="RGD"/>
</dbReference>
<dbReference type="GO" id="GO:0070374">
    <property type="term" value="P:positive regulation of ERK1 and ERK2 cascade"/>
    <property type="evidence" value="ECO:0000266"/>
    <property type="project" value="RGD"/>
</dbReference>
<dbReference type="GO" id="GO:0010628">
    <property type="term" value="P:positive regulation of gene expression"/>
    <property type="evidence" value="ECO:0000315"/>
    <property type="project" value="BHF-UCL"/>
</dbReference>
<dbReference type="GO" id="GO:0045687">
    <property type="term" value="P:positive regulation of glial cell differentiation"/>
    <property type="evidence" value="ECO:0000315"/>
    <property type="project" value="RGD"/>
</dbReference>
<dbReference type="GO" id="GO:0045618">
    <property type="term" value="P:positive regulation of keratinocyte differentiation"/>
    <property type="evidence" value="ECO:0000266"/>
    <property type="project" value="RGD"/>
</dbReference>
<dbReference type="GO" id="GO:0002052">
    <property type="term" value="P:positive regulation of neuroblast proliferation"/>
    <property type="evidence" value="ECO:0000315"/>
    <property type="project" value="RGD"/>
</dbReference>
<dbReference type="GO" id="GO:0045747">
    <property type="term" value="P:positive regulation of Notch signaling pathway"/>
    <property type="evidence" value="ECO:0000266"/>
    <property type="project" value="RGD"/>
</dbReference>
<dbReference type="GO" id="GO:0046579">
    <property type="term" value="P:positive regulation of Ras protein signal transduction"/>
    <property type="evidence" value="ECO:0000266"/>
    <property type="project" value="RGD"/>
</dbReference>
<dbReference type="GO" id="GO:0046427">
    <property type="term" value="P:positive regulation of receptor signaling pathway via JAK-STAT"/>
    <property type="evidence" value="ECO:0000250"/>
    <property type="project" value="UniProtKB"/>
</dbReference>
<dbReference type="GO" id="GO:0051152">
    <property type="term" value="P:positive regulation of smooth muscle cell differentiation"/>
    <property type="evidence" value="ECO:0000266"/>
    <property type="project" value="RGD"/>
</dbReference>
<dbReference type="GO" id="GO:0045944">
    <property type="term" value="P:positive regulation of transcription by RNA polymerase II"/>
    <property type="evidence" value="ECO:0000315"/>
    <property type="project" value="RGD"/>
</dbReference>
<dbReference type="GO" id="GO:0007221">
    <property type="term" value="P:positive regulation of transcription of Notch receptor target"/>
    <property type="evidence" value="ECO:0000315"/>
    <property type="project" value="RGD"/>
</dbReference>
<dbReference type="GO" id="GO:0045070">
    <property type="term" value="P:positive regulation of viral genome replication"/>
    <property type="evidence" value="ECO:0000266"/>
    <property type="project" value="RGD"/>
</dbReference>
<dbReference type="GO" id="GO:0060740">
    <property type="term" value="P:prostate gland epithelium morphogenesis"/>
    <property type="evidence" value="ECO:0000266"/>
    <property type="project" value="RGD"/>
</dbReference>
<dbReference type="GO" id="GO:0030163">
    <property type="term" value="P:protein catabolic process"/>
    <property type="evidence" value="ECO:0000266"/>
    <property type="project" value="RGD"/>
</dbReference>
<dbReference type="GO" id="GO:0006606">
    <property type="term" value="P:protein import into nucleus"/>
    <property type="evidence" value="ECO:0000266"/>
    <property type="project" value="RGD"/>
</dbReference>
<dbReference type="GO" id="GO:0003184">
    <property type="term" value="P:pulmonary valve morphogenesis"/>
    <property type="evidence" value="ECO:0000266"/>
    <property type="project" value="RGD"/>
</dbReference>
<dbReference type="GO" id="GO:0003264">
    <property type="term" value="P:regulation of cardioblast proliferation"/>
    <property type="evidence" value="ECO:0000315"/>
    <property type="project" value="RGD"/>
</dbReference>
<dbReference type="GO" id="GO:0061344">
    <property type="term" value="P:regulation of cell adhesion involved in heart morphogenesis"/>
    <property type="evidence" value="ECO:0000266"/>
    <property type="project" value="RGD"/>
</dbReference>
<dbReference type="GO" id="GO:0030334">
    <property type="term" value="P:regulation of cell migration"/>
    <property type="evidence" value="ECO:0000266"/>
    <property type="project" value="RGD"/>
</dbReference>
<dbReference type="GO" id="GO:0042127">
    <property type="term" value="P:regulation of cell population proliferation"/>
    <property type="evidence" value="ECO:0000315"/>
    <property type="project" value="RGD"/>
</dbReference>
<dbReference type="GO" id="GO:0050678">
    <property type="term" value="P:regulation of epithelial cell proliferation"/>
    <property type="evidence" value="ECO:0000266"/>
    <property type="project" value="RGD"/>
</dbReference>
<dbReference type="GO" id="GO:0060768">
    <property type="term" value="P:regulation of epithelial cell proliferation involved in prostate gland development"/>
    <property type="evidence" value="ECO:0000266"/>
    <property type="project" value="RGD"/>
</dbReference>
<dbReference type="GO" id="GO:1901201">
    <property type="term" value="P:regulation of extracellular matrix assembly"/>
    <property type="evidence" value="ECO:0000266"/>
    <property type="project" value="RGD"/>
</dbReference>
<dbReference type="GO" id="GO:0010468">
    <property type="term" value="P:regulation of gene expression"/>
    <property type="evidence" value="ECO:0000266"/>
    <property type="project" value="RGD"/>
</dbReference>
<dbReference type="GO" id="GO:0045607">
    <property type="term" value="P:regulation of inner ear auditory receptor cell differentiation"/>
    <property type="evidence" value="ECO:0000266"/>
    <property type="project" value="RGD"/>
</dbReference>
<dbReference type="GO" id="GO:0050767">
    <property type="term" value="P:regulation of neurogenesis"/>
    <property type="evidence" value="ECO:0000266"/>
    <property type="project" value="RGD"/>
</dbReference>
<dbReference type="GO" id="GO:0008593">
    <property type="term" value="P:regulation of Notch signaling pathway"/>
    <property type="evidence" value="ECO:0000266"/>
    <property type="project" value="RGD"/>
</dbReference>
<dbReference type="GO" id="GO:0014807">
    <property type="term" value="P:regulation of somitogenesis"/>
    <property type="evidence" value="ECO:0000266"/>
    <property type="project" value="RGD"/>
</dbReference>
<dbReference type="GO" id="GO:0072091">
    <property type="term" value="P:regulation of stem cell proliferation"/>
    <property type="evidence" value="ECO:0000266"/>
    <property type="project" value="RGD"/>
</dbReference>
<dbReference type="GO" id="GO:0006357">
    <property type="term" value="P:regulation of transcription by RNA polymerase II"/>
    <property type="evidence" value="ECO:0000266"/>
    <property type="project" value="RGD"/>
</dbReference>
<dbReference type="GO" id="GO:0032496">
    <property type="term" value="P:response to lipopolysaccharide"/>
    <property type="evidence" value="ECO:0000270"/>
    <property type="project" value="RGD"/>
</dbReference>
<dbReference type="GO" id="GO:0032495">
    <property type="term" value="P:response to muramyl dipeptide"/>
    <property type="evidence" value="ECO:0000266"/>
    <property type="project" value="RGD"/>
</dbReference>
<dbReference type="GO" id="GO:0042670">
    <property type="term" value="P:retinal cone cell differentiation"/>
    <property type="evidence" value="ECO:0000266"/>
    <property type="project" value="RGD"/>
</dbReference>
<dbReference type="GO" id="GO:0060528">
    <property type="term" value="P:secretory columnal luminar epithelial cell differentiation involved in prostate glandular acinus development"/>
    <property type="evidence" value="ECO:0000266"/>
    <property type="project" value="RGD"/>
</dbReference>
<dbReference type="GO" id="GO:0035914">
    <property type="term" value="P:skeletal muscle cell differentiation"/>
    <property type="evidence" value="ECO:0000266"/>
    <property type="project" value="RGD"/>
</dbReference>
<dbReference type="GO" id="GO:0048103">
    <property type="term" value="P:somatic stem cell division"/>
    <property type="evidence" value="ECO:0000266"/>
    <property type="project" value="RGD"/>
</dbReference>
<dbReference type="GO" id="GO:0007283">
    <property type="term" value="P:spermatogenesis"/>
    <property type="evidence" value="ECO:0000315"/>
    <property type="project" value="RGD"/>
</dbReference>
<dbReference type="GO" id="GO:0002040">
    <property type="term" value="P:sprouting angiogenesis"/>
    <property type="evidence" value="ECO:0000266"/>
    <property type="project" value="RGD"/>
</dbReference>
<dbReference type="GO" id="GO:0072538">
    <property type="term" value="P:T-helper 17 type immune response"/>
    <property type="evidence" value="ECO:0000266"/>
    <property type="project" value="RGD"/>
</dbReference>
<dbReference type="GO" id="GO:0042246">
    <property type="term" value="P:tissue regeneration"/>
    <property type="evidence" value="ECO:0000270"/>
    <property type="project" value="RGD"/>
</dbReference>
<dbReference type="GO" id="GO:0006366">
    <property type="term" value="P:transcription by RNA polymerase II"/>
    <property type="evidence" value="ECO:0000266"/>
    <property type="project" value="RGD"/>
</dbReference>
<dbReference type="GO" id="GO:0035148">
    <property type="term" value="P:tube formation"/>
    <property type="evidence" value="ECO:0000250"/>
    <property type="project" value="UniProtKB"/>
</dbReference>
<dbReference type="GO" id="GO:0060979">
    <property type="term" value="P:vasculogenesis involved in coronary vascular morphogenesis"/>
    <property type="evidence" value="ECO:0000266"/>
    <property type="project" value="RGD"/>
</dbReference>
<dbReference type="GO" id="GO:0048845">
    <property type="term" value="P:venous blood vessel morphogenesis"/>
    <property type="evidence" value="ECO:0000266"/>
    <property type="project" value="RGD"/>
</dbReference>
<dbReference type="GO" id="GO:0060843">
    <property type="term" value="P:venous endothelial cell differentiation"/>
    <property type="evidence" value="ECO:0000266"/>
    <property type="project" value="RGD"/>
</dbReference>
<dbReference type="GO" id="GO:0060412">
    <property type="term" value="P:ventricular septum morphogenesis"/>
    <property type="evidence" value="ECO:0000266"/>
    <property type="project" value="RGD"/>
</dbReference>
<dbReference type="GO" id="GO:0003222">
    <property type="term" value="P:ventricular trabecula myocardium morphogenesis"/>
    <property type="evidence" value="ECO:0000266"/>
    <property type="project" value="RGD"/>
</dbReference>
<dbReference type="CDD" id="cd00054">
    <property type="entry name" value="EGF_CA"/>
    <property type="match status" value="29"/>
</dbReference>
<dbReference type="CDD" id="cd21702">
    <property type="entry name" value="JMTM_Notch1"/>
    <property type="match status" value="1"/>
</dbReference>
<dbReference type="FunFam" id="2.10.25.10:FF:000123">
    <property type="entry name" value="Crumbs homolog 1 (Drosophila)"/>
    <property type="match status" value="1"/>
</dbReference>
<dbReference type="FunFam" id="2.10.25.10:FF:000151">
    <property type="entry name" value="FAT atypical cadherin 4"/>
    <property type="match status" value="1"/>
</dbReference>
<dbReference type="FunFam" id="1.25.40.20:FF:000005">
    <property type="entry name" value="Neurogenic locus notch 1"/>
    <property type="match status" value="1"/>
</dbReference>
<dbReference type="FunFam" id="2.10.25.10:FF:000004">
    <property type="entry name" value="Neurogenic locus notch 1"/>
    <property type="match status" value="8"/>
</dbReference>
<dbReference type="FunFam" id="2.10.25.10:FF:000080">
    <property type="entry name" value="Neurogenic locus notch 1"/>
    <property type="match status" value="2"/>
</dbReference>
<dbReference type="FunFam" id="2.10.25.10:FF:000136">
    <property type="entry name" value="Neurogenic locus notch 1"/>
    <property type="match status" value="1"/>
</dbReference>
<dbReference type="FunFam" id="2.10.25.10:FF:000279">
    <property type="entry name" value="Neurogenic locus notch 1"/>
    <property type="match status" value="1"/>
</dbReference>
<dbReference type="FunFam" id="3.30.300.320:FF:000001">
    <property type="entry name" value="Neurogenic locus notch 1"/>
    <property type="match status" value="1"/>
</dbReference>
<dbReference type="FunFam" id="3.30.70.3310:FF:000003">
    <property type="entry name" value="Neurogenic locus notch 1"/>
    <property type="match status" value="1"/>
</dbReference>
<dbReference type="FunFam" id="2.10.25.10:FF:000558">
    <property type="entry name" value="Neurogenic locus notch homolog protein 1"/>
    <property type="match status" value="1"/>
</dbReference>
<dbReference type="FunFam" id="2.10.25.10:FF:000688">
    <property type="entry name" value="Neurogenic locus notch homolog protein 1"/>
    <property type="match status" value="1"/>
</dbReference>
<dbReference type="FunFam" id="2.10.25.10:FF:000955">
    <property type="entry name" value="Neurogenic locus notch homolog protein 1"/>
    <property type="match status" value="1"/>
</dbReference>
<dbReference type="FunFam" id="2.10.25.10:FF:000031">
    <property type="entry name" value="neurogenic locus notch homolog protein 3"/>
    <property type="match status" value="1"/>
</dbReference>
<dbReference type="FunFam" id="2.10.25.10:FF:000100">
    <property type="entry name" value="neurogenic locus notch homolog protein 3"/>
    <property type="match status" value="1"/>
</dbReference>
<dbReference type="FunFam" id="2.10.25.10:FF:000060">
    <property type="entry name" value="Neurogenic locus notch protein 1"/>
    <property type="match status" value="2"/>
</dbReference>
<dbReference type="FunFam" id="2.10.25.10:FF:000092">
    <property type="entry name" value="Neurogenic locus notch protein 1"/>
    <property type="match status" value="1"/>
</dbReference>
<dbReference type="FunFam" id="2.10.25.10:FF:000127">
    <property type="entry name" value="Neurogenic locus notch protein 1"/>
    <property type="match status" value="2"/>
</dbReference>
<dbReference type="FunFam" id="2.10.25.10:FF:000157">
    <property type="entry name" value="Neurogenic locus notch protein 1"/>
    <property type="match status" value="1"/>
</dbReference>
<dbReference type="FunFam" id="2.10.25.10:FF:000253">
    <property type="entry name" value="Neurogenic locus notch protein 1"/>
    <property type="match status" value="1"/>
</dbReference>
<dbReference type="FunFam" id="2.10.25.10:FF:000521">
    <property type="entry name" value="Neurogenic locus notch protein 1"/>
    <property type="match status" value="1"/>
</dbReference>
<dbReference type="FunFam" id="2.10.25.10:FF:000524">
    <property type="entry name" value="Neurogenic locus notch protein 1"/>
    <property type="match status" value="1"/>
</dbReference>
<dbReference type="FunFam" id="2.10.25.10:FF:000125">
    <property type="entry name" value="Neurogenic locus notch protein-like"/>
    <property type="match status" value="1"/>
</dbReference>
<dbReference type="FunFam" id="2.10.25.10:FF:000095">
    <property type="entry name" value="Notch, isoform B"/>
    <property type="match status" value="1"/>
</dbReference>
<dbReference type="FunFam" id="2.10.25.10:FF:000143">
    <property type="entry name" value="Protein crumbs 1"/>
    <property type="match status" value="1"/>
</dbReference>
<dbReference type="FunFam" id="2.10.25.10:FF:000146">
    <property type="entry name" value="Putative neurogenic locus notch"/>
    <property type="match status" value="1"/>
</dbReference>
<dbReference type="FunFam" id="2.10.25.10:FF:000309">
    <property type="entry name" value="Uncharacterized protein, isoform A"/>
    <property type="match status" value="1"/>
</dbReference>
<dbReference type="FunFam" id="2.10.25.10:FF:000472">
    <property type="entry name" value="Uncharacterized protein, isoform A"/>
    <property type="match status" value="1"/>
</dbReference>
<dbReference type="Gene3D" id="3.30.300.320">
    <property type="match status" value="1"/>
</dbReference>
<dbReference type="Gene3D" id="3.30.70.3310">
    <property type="match status" value="1"/>
</dbReference>
<dbReference type="Gene3D" id="1.25.40.20">
    <property type="entry name" value="Ankyrin repeat-containing domain"/>
    <property type="match status" value="1"/>
</dbReference>
<dbReference type="Gene3D" id="2.10.25.10">
    <property type="entry name" value="Laminin"/>
    <property type="match status" value="35"/>
</dbReference>
<dbReference type="InterPro" id="IPR002110">
    <property type="entry name" value="Ankyrin_rpt"/>
</dbReference>
<dbReference type="InterPro" id="IPR036770">
    <property type="entry name" value="Ankyrin_rpt-contain_sf"/>
</dbReference>
<dbReference type="InterPro" id="IPR001881">
    <property type="entry name" value="EGF-like_Ca-bd_dom"/>
</dbReference>
<dbReference type="InterPro" id="IPR013032">
    <property type="entry name" value="EGF-like_CS"/>
</dbReference>
<dbReference type="InterPro" id="IPR000742">
    <property type="entry name" value="EGF-like_dom"/>
</dbReference>
<dbReference type="InterPro" id="IPR000152">
    <property type="entry name" value="EGF-type_Asp/Asn_hydroxyl_site"/>
</dbReference>
<dbReference type="InterPro" id="IPR018097">
    <property type="entry name" value="EGF_Ca-bd_CS"/>
</dbReference>
<dbReference type="InterPro" id="IPR009030">
    <property type="entry name" value="Growth_fac_rcpt_cys_sf"/>
</dbReference>
<dbReference type="InterPro" id="IPR008297">
    <property type="entry name" value="Notch"/>
</dbReference>
<dbReference type="InterPro" id="IPR035993">
    <property type="entry name" value="Notch-like_dom_sf"/>
</dbReference>
<dbReference type="InterPro" id="IPR049883">
    <property type="entry name" value="NOTCH1_EGF-like"/>
</dbReference>
<dbReference type="InterPro" id="IPR022362">
    <property type="entry name" value="Notch_1"/>
</dbReference>
<dbReference type="InterPro" id="IPR024600">
    <property type="entry name" value="Notch_C"/>
</dbReference>
<dbReference type="InterPro" id="IPR051022">
    <property type="entry name" value="Notch_Cell-Fate_Det"/>
</dbReference>
<dbReference type="InterPro" id="IPR000800">
    <property type="entry name" value="Notch_dom"/>
</dbReference>
<dbReference type="InterPro" id="IPR010660">
    <property type="entry name" value="Notch_NOD_dom"/>
</dbReference>
<dbReference type="InterPro" id="IPR011656">
    <property type="entry name" value="Notch_NODP_dom"/>
</dbReference>
<dbReference type="PANTHER" id="PTHR24049">
    <property type="entry name" value="CRUMBS FAMILY MEMBER"/>
    <property type="match status" value="1"/>
</dbReference>
<dbReference type="Pfam" id="PF00023">
    <property type="entry name" value="Ank"/>
    <property type="match status" value="1"/>
</dbReference>
<dbReference type="Pfam" id="PF12796">
    <property type="entry name" value="Ank_2"/>
    <property type="match status" value="2"/>
</dbReference>
<dbReference type="Pfam" id="PF00008">
    <property type="entry name" value="EGF"/>
    <property type="match status" value="18"/>
</dbReference>
<dbReference type="Pfam" id="PF07645">
    <property type="entry name" value="EGF_CA"/>
    <property type="match status" value="4"/>
</dbReference>
<dbReference type="Pfam" id="PF12661">
    <property type="entry name" value="hEGF"/>
    <property type="match status" value="8"/>
</dbReference>
<dbReference type="Pfam" id="PF06816">
    <property type="entry name" value="NOD"/>
    <property type="match status" value="1"/>
</dbReference>
<dbReference type="Pfam" id="PF07684">
    <property type="entry name" value="NODP"/>
    <property type="match status" value="1"/>
</dbReference>
<dbReference type="Pfam" id="PF00066">
    <property type="entry name" value="Notch"/>
    <property type="match status" value="3"/>
</dbReference>
<dbReference type="PIRSF" id="PIRSF002279">
    <property type="entry name" value="Notch"/>
    <property type="match status" value="1"/>
</dbReference>
<dbReference type="PRINTS" id="PR01452">
    <property type="entry name" value="LNOTCHREPEAT"/>
</dbReference>
<dbReference type="PRINTS" id="PR01983">
    <property type="entry name" value="NOTCH"/>
</dbReference>
<dbReference type="PRINTS" id="PR01984">
    <property type="entry name" value="NOTCH1"/>
</dbReference>
<dbReference type="SMART" id="SM00248">
    <property type="entry name" value="ANK"/>
    <property type="match status" value="6"/>
</dbReference>
<dbReference type="SMART" id="SM01334">
    <property type="entry name" value="DUF3454"/>
    <property type="match status" value="1"/>
</dbReference>
<dbReference type="SMART" id="SM00181">
    <property type="entry name" value="EGF"/>
    <property type="match status" value="36"/>
</dbReference>
<dbReference type="SMART" id="SM00179">
    <property type="entry name" value="EGF_CA"/>
    <property type="match status" value="32"/>
</dbReference>
<dbReference type="SMART" id="SM00004">
    <property type="entry name" value="NL"/>
    <property type="match status" value="3"/>
</dbReference>
<dbReference type="SMART" id="SM01338">
    <property type="entry name" value="NOD"/>
    <property type="match status" value="1"/>
</dbReference>
<dbReference type="SMART" id="SM01339">
    <property type="entry name" value="NODP"/>
    <property type="match status" value="1"/>
</dbReference>
<dbReference type="SUPFAM" id="SSF48403">
    <property type="entry name" value="Ankyrin repeat"/>
    <property type="match status" value="1"/>
</dbReference>
<dbReference type="SUPFAM" id="SSF57196">
    <property type="entry name" value="EGF/Laminin"/>
    <property type="match status" value="18"/>
</dbReference>
<dbReference type="SUPFAM" id="SSF57184">
    <property type="entry name" value="Growth factor receptor domain"/>
    <property type="match status" value="5"/>
</dbReference>
<dbReference type="SUPFAM" id="SSF90193">
    <property type="entry name" value="Notch domain"/>
    <property type="match status" value="3"/>
</dbReference>
<dbReference type="PROSITE" id="PS50297">
    <property type="entry name" value="ANK_REP_REGION"/>
    <property type="match status" value="1"/>
</dbReference>
<dbReference type="PROSITE" id="PS50088">
    <property type="entry name" value="ANK_REPEAT"/>
    <property type="match status" value="4"/>
</dbReference>
<dbReference type="PROSITE" id="PS00010">
    <property type="entry name" value="ASX_HYDROXYL"/>
    <property type="match status" value="22"/>
</dbReference>
<dbReference type="PROSITE" id="PS00022">
    <property type="entry name" value="EGF_1"/>
    <property type="match status" value="35"/>
</dbReference>
<dbReference type="PROSITE" id="PS01186">
    <property type="entry name" value="EGF_2"/>
    <property type="match status" value="27"/>
</dbReference>
<dbReference type="PROSITE" id="PS50026">
    <property type="entry name" value="EGF_3"/>
    <property type="match status" value="36"/>
</dbReference>
<dbReference type="PROSITE" id="PS01187">
    <property type="entry name" value="EGF_CA"/>
    <property type="match status" value="21"/>
</dbReference>
<dbReference type="PROSITE" id="PS50258">
    <property type="entry name" value="LNR"/>
    <property type="match status" value="3"/>
</dbReference>
<gene>
    <name type="primary">Notch1</name>
</gene>
<accession>Q07008</accession>
<accession>F1M9E7</accession>